<name>CD4_HUMAN</name>
<feature type="signal peptide" evidence="6 23">
    <location>
        <begin position="1"/>
        <end position="25"/>
    </location>
</feature>
<feature type="chain" id="PRO_0000014621" description="T-cell surface glycoprotein CD4">
    <location>
        <begin position="26"/>
        <end position="458"/>
    </location>
</feature>
<feature type="topological domain" description="Extracellular" evidence="1">
    <location>
        <begin position="26"/>
        <end position="396"/>
    </location>
</feature>
<feature type="transmembrane region" description="Helical" evidence="1">
    <location>
        <begin position="397"/>
        <end position="418"/>
    </location>
</feature>
<feature type="topological domain" description="Cytoplasmic" evidence="1">
    <location>
        <begin position="419"/>
        <end position="458"/>
    </location>
</feature>
<feature type="domain" description="Ig-like V-type">
    <location>
        <begin position="26"/>
        <end position="125"/>
    </location>
</feature>
<feature type="domain" description="Ig-like C2-type 1">
    <location>
        <begin position="126"/>
        <end position="203"/>
    </location>
</feature>
<feature type="domain" description="Ig-like C2-type 2">
    <location>
        <begin position="204"/>
        <end position="317"/>
    </location>
</feature>
<feature type="domain" description="Ig-like C2-type 3">
    <location>
        <begin position="318"/>
        <end position="374"/>
    </location>
</feature>
<feature type="region of interest" description="HIV-1 Vpu-susceptibility domain">
    <location>
        <begin position="427"/>
        <end position="455"/>
    </location>
</feature>
<feature type="modified residue" description="Phosphoserine" evidence="18">
    <location>
        <position position="433"/>
    </location>
</feature>
<feature type="modified residue" description="Phosphoserine" evidence="18">
    <location>
        <position position="440"/>
    </location>
</feature>
<feature type="modified residue" description="Phosphoserine" evidence="18">
    <location>
        <position position="456"/>
    </location>
</feature>
<feature type="lipid moiety-binding region" description="S-palmitoyl cysteine" evidence="7">
    <location>
        <position position="419"/>
    </location>
</feature>
<feature type="lipid moiety-binding region" description="S-palmitoyl cysteine" evidence="7">
    <location>
        <position position="422"/>
    </location>
</feature>
<feature type="glycosylation site" id="CAR_000053" description="N-linked (GlcNAc...) asparagine" evidence="15 17 23">
    <location>
        <position position="296"/>
    </location>
</feature>
<feature type="glycosylation site" id="CAR_000054" description="N-linked (GlcNAc...) asparagine" evidence="17 23">
    <location>
        <position position="325"/>
    </location>
</feature>
<feature type="disulfide bond" evidence="2 23">
    <location>
        <begin position="41"/>
        <end position="109"/>
    </location>
</feature>
<feature type="disulfide bond" evidence="2 23">
    <location>
        <begin position="155"/>
        <end position="184"/>
    </location>
</feature>
<feature type="disulfide bond" evidence="2 23">
    <location>
        <begin position="328"/>
        <end position="370"/>
    </location>
</feature>
<feature type="sequence variant" id="VAR_023459" description="In dbSNP:rs28917504." evidence="36">
    <original>K</original>
    <variation>E</variation>
    <location>
        <position position="191"/>
    </location>
</feature>
<feature type="sequence variant" id="VAR_023460" description="In dbSNP:rs11064419." evidence="36">
    <original>F</original>
    <variation>S</variation>
    <location>
        <position position="227"/>
    </location>
</feature>
<feature type="sequence variant" id="VAR_003906" description="In OKT4-negative populations; dbSNP:rs28919570." evidence="12 16 36">
    <original>R</original>
    <variation>W</variation>
    <location>
        <position position="265"/>
    </location>
</feature>
<feature type="mutagenesis site" description="Increases the affinity for MHCII; when associated with W-70; R-85 and R-88." evidence="19">
    <original>Q</original>
    <variation>Y</variation>
    <location>
        <position position="65"/>
    </location>
</feature>
<feature type="mutagenesis site" description="Abrogates the interaction with MHCII and T cell activation." evidence="30">
    <original>F</original>
    <variation>I</variation>
    <location>
        <position position="68"/>
    </location>
</feature>
<feature type="mutagenesis site" description="Increases the affinity for MHCII; when associated with Y-65; R-85 and R-88." evidence="19">
    <original>T</original>
    <variation>W</variation>
    <location>
        <position position="70"/>
    </location>
</feature>
<feature type="mutagenesis site" description="Increases the affinity for MHCII; when associated with Y-65; W-70 and R-88." evidence="19">
    <original>S</original>
    <variation>R</variation>
    <location>
        <position position="85"/>
    </location>
</feature>
<feature type="mutagenesis site" description="Increases the affinity for MHCII; when associated with Y-65; W-70 and R-85." evidence="19">
    <original>D</original>
    <variation>R</variation>
    <location>
        <position position="88"/>
    </location>
</feature>
<feature type="mutagenesis site" description="Has no effect on the interaction with MHCII. Impairs recognition by OKT4 antibody." evidence="30">
    <original>R</original>
    <variation>A</variation>
    <location>
        <position position="265"/>
    </location>
</feature>
<feature type="mutagenesis site" description="No effect." evidence="33">
    <original>M</original>
    <variation>T</variation>
    <location>
        <position position="432"/>
    </location>
</feature>
<feature type="mutagenesis site" description="About 75% loss of internalization." evidence="18">
    <original>S</original>
    <variation>A</variation>
    <location>
        <position position="433"/>
    </location>
</feature>
<feature type="mutagenesis site" description="No effect." evidence="33">
    <original>S</original>
    <variation>A</variation>
    <location>
        <position position="433"/>
    </location>
</feature>
<feature type="mutagenesis site" description="Loss of Nef-induced CD4 down-modulation." evidence="33">
    <original>LL</original>
    <variation>AA</variation>
    <location>
        <begin position="438"/>
        <end position="439"/>
    </location>
</feature>
<feature type="mutagenesis site" description="No effect." evidence="33">
    <original>S</original>
    <variation>L</variation>
    <location>
        <position position="440"/>
    </location>
</feature>
<feature type="mutagenesis site" description="Loss of homodimerization; when associated with A-447." evidence="34">
    <original>C</original>
    <variation>A</variation>
    <location>
        <position position="445"/>
    </location>
</feature>
<feature type="mutagenesis site" description="Loss of homodimerization; when associated with A-445." evidence="34">
    <original>C</original>
    <variation>A</variation>
    <location>
        <position position="447"/>
    </location>
</feature>
<feature type="mutagenesis site" description="Abolished interaction with SPG21 and induced T-cell activation." evidence="3">
    <location>
        <begin position="457"/>
        <end position="458"/>
    </location>
</feature>
<feature type="strand" evidence="46">
    <location>
        <begin position="27"/>
        <end position="32"/>
    </location>
</feature>
<feature type="strand" evidence="46">
    <location>
        <begin position="37"/>
        <end position="39"/>
    </location>
</feature>
<feature type="strand" evidence="46">
    <location>
        <begin position="44"/>
        <end position="47"/>
    </location>
</feature>
<feature type="strand" evidence="46">
    <location>
        <begin position="51"/>
        <end position="55"/>
    </location>
</feature>
<feature type="strand" evidence="44">
    <location>
        <begin position="56"/>
        <end position="58"/>
    </location>
</feature>
<feature type="strand" evidence="46">
    <location>
        <begin position="60"/>
        <end position="63"/>
    </location>
</feature>
<feature type="strand" evidence="45">
    <location>
        <begin position="68"/>
        <end position="71"/>
    </location>
</feature>
<feature type="turn" evidence="46">
    <location>
        <begin position="75"/>
        <end position="79"/>
    </location>
</feature>
<feature type="helix" evidence="46">
    <location>
        <begin position="84"/>
        <end position="89"/>
    </location>
</feature>
<feature type="strand" evidence="46">
    <location>
        <begin position="94"/>
        <end position="96"/>
    </location>
</feature>
<feature type="helix" evidence="46">
    <location>
        <begin position="101"/>
        <end position="103"/>
    </location>
</feature>
<feature type="strand" evidence="46">
    <location>
        <begin position="105"/>
        <end position="111"/>
    </location>
</feature>
<feature type="strand" evidence="46">
    <location>
        <begin position="114"/>
        <end position="128"/>
    </location>
</feature>
<feature type="strand" evidence="42">
    <location>
        <begin position="131"/>
        <end position="134"/>
    </location>
</feature>
<feature type="strand" evidence="39">
    <location>
        <begin position="135"/>
        <end position="137"/>
    </location>
</feature>
<feature type="strand" evidence="46">
    <location>
        <begin position="139"/>
        <end position="144"/>
    </location>
</feature>
<feature type="strand" evidence="46">
    <location>
        <begin position="152"/>
        <end position="156"/>
    </location>
</feature>
<feature type="strand" evidence="38">
    <location>
        <begin position="158"/>
        <end position="160"/>
    </location>
</feature>
<feature type="strand" evidence="46">
    <location>
        <begin position="162"/>
        <end position="172"/>
    </location>
</feature>
<feature type="helix" evidence="46">
    <location>
        <begin position="176"/>
        <end position="178"/>
    </location>
</feature>
<feature type="strand" evidence="46">
    <location>
        <begin position="180"/>
        <end position="188"/>
    </location>
</feature>
<feature type="strand" evidence="46">
    <location>
        <begin position="191"/>
        <end position="199"/>
    </location>
</feature>
<feature type="strand" evidence="37">
    <location>
        <begin position="200"/>
        <end position="202"/>
    </location>
</feature>
<feature type="helix" evidence="41">
    <location>
        <begin position="398"/>
        <end position="421"/>
    </location>
</feature>
<feature type="strand" evidence="41">
    <location>
        <begin position="426"/>
        <end position="428"/>
    </location>
</feature>
<feature type="helix" evidence="43">
    <location>
        <begin position="432"/>
        <end position="438"/>
    </location>
</feature>
<feature type="strand" evidence="40">
    <location>
        <begin position="440"/>
        <end position="442"/>
    </location>
</feature>
<evidence type="ECO:0000255" key="1"/>
<evidence type="ECO:0000255" key="2">
    <source>
        <dbReference type="PROSITE-ProRule" id="PRU00114"/>
    </source>
</evidence>
<evidence type="ECO:0000269" key="3">
    <source>
    </source>
</evidence>
<evidence type="ECO:0000269" key="4">
    <source>
    </source>
</evidence>
<evidence type="ECO:0000269" key="5">
    <source>
    </source>
</evidence>
<evidence type="ECO:0000269" key="6">
    <source>
    </source>
</evidence>
<evidence type="ECO:0000269" key="7">
    <source>
    </source>
</evidence>
<evidence type="ECO:0000269" key="8">
    <source>
    </source>
</evidence>
<evidence type="ECO:0000269" key="9">
    <source>
    </source>
</evidence>
<evidence type="ECO:0000269" key="10">
    <source>
    </source>
</evidence>
<evidence type="ECO:0000269" key="11">
    <source>
    </source>
</evidence>
<evidence type="ECO:0000269" key="12">
    <source>
    </source>
</evidence>
<evidence type="ECO:0000269" key="13">
    <source>
    </source>
</evidence>
<evidence type="ECO:0000269" key="14">
    <source>
    </source>
</evidence>
<evidence type="ECO:0000269" key="15">
    <source>
    </source>
</evidence>
<evidence type="ECO:0000269" key="16">
    <source>
    </source>
</evidence>
<evidence type="ECO:0000269" key="17">
    <source>
    </source>
</evidence>
<evidence type="ECO:0000269" key="18">
    <source>
    </source>
</evidence>
<evidence type="ECO:0000269" key="19">
    <source>
    </source>
</evidence>
<evidence type="ECO:0000269" key="20">
    <source>
    </source>
</evidence>
<evidence type="ECO:0000269" key="21">
    <source>
    </source>
</evidence>
<evidence type="ECO:0000269" key="22">
    <source>
    </source>
</evidence>
<evidence type="ECO:0000269" key="23">
    <source>
    </source>
</evidence>
<evidence type="ECO:0000269" key="24">
    <source>
    </source>
</evidence>
<evidence type="ECO:0000269" key="25">
    <source>
    </source>
</evidence>
<evidence type="ECO:0000269" key="26">
    <source>
    </source>
</evidence>
<evidence type="ECO:0000269" key="27">
    <source>
    </source>
</evidence>
<evidence type="ECO:0000269" key="28">
    <source>
    </source>
</evidence>
<evidence type="ECO:0000269" key="29">
    <source>
    </source>
</evidence>
<evidence type="ECO:0000269" key="30">
    <source>
    </source>
</evidence>
<evidence type="ECO:0000269" key="31">
    <source>
    </source>
</evidence>
<evidence type="ECO:0000269" key="32">
    <source>
    </source>
</evidence>
<evidence type="ECO:0000269" key="33">
    <source>
    </source>
</evidence>
<evidence type="ECO:0000269" key="34">
    <source>
    </source>
</evidence>
<evidence type="ECO:0000269" key="35">
    <source>
    </source>
</evidence>
<evidence type="ECO:0000269" key="36">
    <source ref="8"/>
</evidence>
<evidence type="ECO:0007829" key="37">
    <source>
        <dbReference type="PDB" id="1CDH"/>
    </source>
</evidence>
<evidence type="ECO:0007829" key="38">
    <source>
        <dbReference type="PDB" id="1CDJ"/>
    </source>
</evidence>
<evidence type="ECO:0007829" key="39">
    <source>
        <dbReference type="PDB" id="1G9N"/>
    </source>
</evidence>
<evidence type="ECO:0007829" key="40">
    <source>
        <dbReference type="PDB" id="1WBR"/>
    </source>
</evidence>
<evidence type="ECO:0007829" key="41">
    <source>
        <dbReference type="PDB" id="2KLU"/>
    </source>
</evidence>
<evidence type="ECO:0007829" key="42">
    <source>
        <dbReference type="PDB" id="2NY1"/>
    </source>
</evidence>
<evidence type="ECO:0007829" key="43">
    <source>
        <dbReference type="PDB" id="3B71"/>
    </source>
</evidence>
<evidence type="ECO:0007829" key="44">
    <source>
        <dbReference type="PDB" id="3LQA"/>
    </source>
</evidence>
<evidence type="ECO:0007829" key="45">
    <source>
        <dbReference type="PDB" id="4H8W"/>
    </source>
</evidence>
<evidence type="ECO:0007829" key="46">
    <source>
        <dbReference type="PDB" id="8W90"/>
    </source>
</evidence>
<protein>
    <recommendedName>
        <fullName>T-cell surface glycoprotein CD4</fullName>
    </recommendedName>
    <alternativeName>
        <fullName>T-cell surface antigen T4/Leu-3</fullName>
    </alternativeName>
    <cdAntigenName>CD4</cdAntigenName>
</protein>
<comment type="function">
    <text evidence="11 21 25 30">Integral membrane glycoprotein that plays an essential role in the immune response and serves multiple functions in responses against both external and internal offenses. In T-cells, functions primarily as a coreceptor for MHC class II molecule:peptide complex. The antigens presented by class II peptides are derived from extracellular proteins while class I peptides are derived from cytosolic proteins. Interacts simultaneously with the T-cell receptor (TCR) and the MHC class II presented by antigen presenting cells (APCs). In turn, recruits the Src kinase LCK to the vicinity of the TCR-CD3 complex. LCK then initiates different intracellular signaling pathways by phosphorylating various substrates ultimately leading to lymphokine production, motility, adhesion and activation of T-helper cells. In other cells such as macrophages or NK cells, plays a role in differentiation/activation, cytokine expression and cell migration in a TCR/LCK-independent pathway. Participates in the development of T-helper cells in the thymus and triggers the differentiation of monocytes into functional mature macrophages.</text>
</comment>
<comment type="function">
    <text evidence="4 8 13 20 31 35">(Microbial infection) Primary receptor for human immunodeficiency virus-1 (HIV-1) (PubMed:12089508, PubMed:16331979, PubMed:2214026, PubMed:9641677). Down-regulated by HIV-1 Vpu (PubMed:17346169). Acts as a receptor for Human Herpes virus 7/HHV-7 (PubMed:7909607).</text>
</comment>
<comment type="subunit">
    <text evidence="3 4 9 10 14 19 24 29 30">Forms disulfide-linked homodimers at the cell surface. Interacts with LCK (PubMed:16888650). Interacts with PTK2/FAK1 (PubMed:18078954). Binds to P4HB/PDI. Interacts with IL16; this interaction induces a CD4-dependent signaling in lymphocytes (PubMed:1673145). Interacts (via Ig-like V-type domain) with MHCII alpha chain (via alpha-2 domain) and beta chain (via beta-2 domain); this interaction increases the affinity of TCR for peptide-MHCII. CD4 oligomerization via Ig-like C2-type 2 and 3 domains appears to be required for stable binding to MHCII and adhesion between T cells and APCs (PubMed:21900604, PubMed:27114505, PubMed:7604010). Interacts with Aedes aegypti long form salivary protein D7L2 (PubMed:36070318). Interacts with Aedes aegypti neutrophil-stimulating factor 1 (PubMed:36070318). Interacts with Aedes aegypti venom allergen-1 (PubMed:36070318).</text>
</comment>
<comment type="subunit">
    <text evidence="8 20 30 35">(Microbial infection) Interacts with HIV-1 Envelope polyprotein gp160 and protein Vpu (PubMed:16331979, PubMed:2214026, PubMed:7604010, PubMed:9641677).</text>
</comment>
<comment type="subunit">
    <text evidence="31">(Microbial infection) Interacts with Human Herpes virus 7 surface proteins.</text>
</comment>
<comment type="interaction">
    <interactant intactId="EBI-353826">
        <id>P01730</id>
    </interactant>
    <interactant intactId="EBI-489374">
        <id>P51681</id>
        <label>CCR5</label>
    </interactant>
    <organismsDiffer>false</organismsDiffer>
    <experiments>3</experiments>
</comment>
<comment type="interaction">
    <interactant intactId="EBI-353826">
        <id>P01730</id>
    </interactant>
    <interactant intactId="EBI-353826">
        <id>P01730</id>
        <label>CD4</label>
    </interactant>
    <organismsDiffer>false</organismsDiffer>
    <experiments>2</experiments>
</comment>
<comment type="interaction">
    <interactant intactId="EBI-353826">
        <id>P01730</id>
    </interactant>
    <interactant intactId="EBI-21591415">
        <id>P13473-2</id>
        <label>LAMP2</label>
    </interactant>
    <organismsDiffer>false</organismsDiffer>
    <experiments>3</experiments>
</comment>
<comment type="interaction">
    <interactant intactId="EBI-353826">
        <id>P01730</id>
    </interactant>
    <interactant intactId="EBI-1348">
        <id>P06239</id>
        <label>LCK</label>
    </interactant>
    <organismsDiffer>false</organismsDiffer>
    <experiments>2</experiments>
</comment>
<comment type="interaction">
    <interactant intactId="EBI-353826">
        <id>P01730</id>
    </interactant>
    <interactant intactId="EBI-493507">
        <id>P04150</id>
        <label>NR3C1</label>
    </interactant>
    <organismsDiffer>false</organismsDiffer>
    <experiments>2</experiments>
</comment>
<comment type="interaction">
    <interactant intactId="EBI-353826">
        <id>P01730</id>
    </interactant>
    <interactant intactId="EBI-2623095">
        <id>Q9Y371</id>
        <label>SH3GLB1</label>
    </interactant>
    <organismsDiffer>false</organismsDiffer>
    <experiments>3</experiments>
</comment>
<comment type="interaction">
    <interactant intactId="EBI-353826">
        <id>P01730</id>
    </interactant>
    <interactant intactId="EBI-6163496">
        <id>P04578</id>
        <label>env</label>
    </interactant>
    <organismsDiffer>true</organismsDiffer>
    <experiments>2</experiments>
</comment>
<comment type="interaction">
    <interactant intactId="EBI-353826">
        <id>P01730</id>
    </interactant>
    <interactant intactId="EBI-6179761">
        <id>PRO_0000038427</id>
        <label>env</label>
        <dbReference type="UniProtKB" id="P04578"/>
    </interactant>
    <organismsDiffer>true</organismsDiffer>
    <experiments>3</experiments>
</comment>
<comment type="interaction">
    <interactant intactId="EBI-353826">
        <id>P01730</id>
    </interactant>
    <interactant intactId="EBI-15845606">
        <id>Q1PHM6</id>
        <label>env</label>
    </interactant>
    <organismsDiffer>true</organismsDiffer>
    <experiments>2</experiments>
</comment>
<comment type="interaction">
    <interactant intactId="EBI-353826">
        <id>P01730</id>
    </interactant>
    <interactant intactId="EBI-16080048">
        <id>Q2N0S6</id>
        <label>env</label>
    </interactant>
    <organismsDiffer>true</organismsDiffer>
    <experiments>3</experiments>
</comment>
<comment type="interaction">
    <interactant intactId="EBI-353826">
        <id>P01730</id>
    </interactant>
    <interactant intactId="EBI-7355020">
        <id>P03407</id>
        <label>nef</label>
    </interactant>
    <organismsDiffer>true</organismsDiffer>
    <experiments>2</experiments>
</comment>
<comment type="interaction">
    <interactant intactId="EBI-353826">
        <id>P01730</id>
    </interactant>
    <interactant intactId="EBI-6164626">
        <id>P05919</id>
        <label>vpu</label>
    </interactant>
    <organismsDiffer>true</organismsDiffer>
    <experiments>3</experiments>
</comment>
<comment type="subcellular location">
    <subcellularLocation>
        <location evidence="4 5 25 26">Cell membrane</location>
        <topology evidence="5 6 12">Single-pass type I membrane protein</topology>
    </subcellularLocation>
    <text>Localizes to lipid rafts (PubMed:12517957, PubMed:9168119). Removed from plasma membrane by HIV-1 Nef protein that increases clathrin-dependent endocytosis of this antigen to target it to lysosomal degradation. Cell surface expression is also down-modulated by HIV-1 Envelope polyprotein gp160 that interacts with, and sequesters CD4 in the endoplasmic reticulum.</text>
</comment>
<comment type="tissue specificity">
    <text evidence="11 21 32">Highly expressed in T-helper cells. The presence of CD4 is a hallmark of T-helper cells which are specialized in the activation and growth of cytotoxic T-cells, regulation of B cells, or activation of phagocytes. CD4 is also present in other immune cells such as macrophages, dendritic cells or NK cells.</text>
</comment>
<comment type="domain">
    <text evidence="19 30">The Ig-like V-type domain mediates the interaction with MHCII.</text>
</comment>
<comment type="PTM">
    <text evidence="7">Palmitoylation and association with LCK contribute to the enrichment of CD4 in lipid rafts.</text>
</comment>
<comment type="PTM">
    <text evidence="18 22">Phosphorylated by PKC; phosphorylation at Ser-433 plays an important role for CD4 internalization.</text>
</comment>
<comment type="polymorphism">
    <text evidence="12 16">The OKT monoclonal antibodies are widely used for the analysis of human peripheral blood T-lymphocytes. OKT4 reacts with T-helper/inducer lymphocytes. The OKT4 epitope of the CD4 cell-surface protein is polymorphic in white, black, and Japanese populations. The variable phenotypic expression is due a CD4 polymorphism. OKT4 positive individuals carry Arg-265 and OKT4 negative individuals carry Trp-265 [MIM:613949].</text>
</comment>
<comment type="disease" evidence="27 28">
    <disease id="DI-06061">
        <name>Immunodeficiency 79</name>
        <acronym>IMD79</acronym>
        <description>An autosomal recessive disorder characterized by childhood onset of recurrent and recalcitrant skin warts due to uncontrolled viral infection with human papillomavirus (HPV). Some patients may also have recurrent respiratory infections. Laboratory studies show a complete absence of CD4+ T cells.</description>
        <dbReference type="MIM" id="619238"/>
    </disease>
    <text>The disease is caused by variants affecting the gene represented in this entry.</text>
</comment>
<comment type="online information" name="Wikipedia">
    <link uri="https://en.wikipedia.org/wiki/CD4"/>
    <text>CD4 entry</text>
</comment>
<accession>P01730</accession>
<accession>B2R737</accession>
<accession>D3DUS5</accession>
<accession>Q4ZGK2</accession>
<accession>Q5U066</accession>
<accession>Q9UDE5</accession>
<reference key="1">
    <citation type="journal article" date="1985" name="Cell">
        <title>The isolation and nucleotide sequence of a cDNA encoding the T cell surface protein T4: a new member of the immunoglobulin gene family.</title>
        <authorList>
            <person name="Maddon P.J."/>
            <person name="Littman D.R."/>
            <person name="Godfrey M."/>
            <person name="Maddon D.E."/>
            <person name="Chess L."/>
            <person name="Axel R."/>
        </authorList>
    </citation>
    <scope>NUCLEOTIDE SEQUENCE [MRNA]</scope>
    <scope>SUBCELLULAR LOCATION</scope>
</reference>
<reference key="2">
    <citation type="journal article" date="1988" name="Cell">
        <title>Corrected CD4 sequence.</title>
        <authorList>
            <person name="Littman D.R."/>
            <person name="Maddon P.J."/>
            <person name="Axel R."/>
        </authorList>
    </citation>
    <scope>SEQUENCE REVISION TO 26</scope>
</reference>
<reference key="3">
    <citation type="journal article" date="1996" name="Genome Res.">
        <title>A gene-rich cluster between the CD4 and triosephosphate isomerase genes at human chromosome 12p13.</title>
        <authorList>
            <person name="Ansari-Lari M.A."/>
            <person name="Muzny D.M."/>
            <person name="Lu J."/>
            <person name="Lu F."/>
            <person name="Lilley C.E."/>
            <person name="Spanos S."/>
            <person name="Malley T."/>
            <person name="Gibbs R.A."/>
        </authorList>
    </citation>
    <scope>NUCLEOTIDE SEQUENCE [GENOMIC DNA]</scope>
</reference>
<reference key="4">
    <citation type="journal article" date="1997" name="Genome Res.">
        <title>Large-scale sequencing in human chromosome 12p13: experimental and computational gene structure determination.</title>
        <authorList>
            <person name="Ansari-Lari M.A."/>
            <person name="Shen Y."/>
            <person name="Muzny D.M."/>
            <person name="Lee W."/>
            <person name="Gibbs R.A."/>
        </authorList>
    </citation>
    <scope>NUCLEOTIDE SEQUENCE [GENOMIC DNA]</scope>
    <source>
        <tissue>Brain</tissue>
    </source>
</reference>
<reference key="5">
    <citation type="journal article" date="1991" name="Hum. Immunol.">
        <title>Humans with OKT4-epitope deficiency have a single nucleotide base change in the CD4 gene, resulting in substitution of TRP240 for ARG240.</title>
        <authorList>
            <person name="Hodge T.W."/>
            <person name="Sasso D.R."/>
            <person name="McDougal J.S."/>
        </authorList>
    </citation>
    <scope>NUCLEOTIDE SEQUENCE [MRNA]</scope>
    <scope>POLYMORPHISM</scope>
    <scope>VARIANT TRP-265</scope>
    <scope>TOPOLOGY</scope>
</reference>
<reference key="6">
    <citation type="submission" date="2003-05" db="EMBL/GenBank/DDBJ databases">
        <title>Cloning of human full-length CDSs in BD Creator(TM) system donor vector.</title>
        <authorList>
            <person name="Kalnine N."/>
            <person name="Chen X."/>
            <person name="Rolfs A."/>
            <person name="Halleck A."/>
            <person name="Hines L."/>
            <person name="Eisenstein S."/>
            <person name="Koundinya M."/>
            <person name="Raphael J."/>
            <person name="Moreira D."/>
            <person name="Kelley T."/>
            <person name="LaBaer J."/>
            <person name="Lin Y."/>
            <person name="Phelan M."/>
            <person name="Farmer A."/>
        </authorList>
    </citation>
    <scope>NUCLEOTIDE SEQUENCE [LARGE SCALE MRNA]</scope>
</reference>
<reference key="7">
    <citation type="journal article" date="2004" name="Nat. Genet.">
        <title>Complete sequencing and characterization of 21,243 full-length human cDNAs.</title>
        <authorList>
            <person name="Ota T."/>
            <person name="Suzuki Y."/>
            <person name="Nishikawa T."/>
            <person name="Otsuki T."/>
            <person name="Sugiyama T."/>
            <person name="Irie R."/>
            <person name="Wakamatsu A."/>
            <person name="Hayashi K."/>
            <person name="Sato H."/>
            <person name="Nagai K."/>
            <person name="Kimura K."/>
            <person name="Makita H."/>
            <person name="Sekine M."/>
            <person name="Obayashi M."/>
            <person name="Nishi T."/>
            <person name="Shibahara T."/>
            <person name="Tanaka T."/>
            <person name="Ishii S."/>
            <person name="Yamamoto J."/>
            <person name="Saito K."/>
            <person name="Kawai Y."/>
            <person name="Isono Y."/>
            <person name="Nakamura Y."/>
            <person name="Nagahari K."/>
            <person name="Murakami K."/>
            <person name="Yasuda T."/>
            <person name="Iwayanagi T."/>
            <person name="Wagatsuma M."/>
            <person name="Shiratori A."/>
            <person name="Sudo H."/>
            <person name="Hosoiri T."/>
            <person name="Kaku Y."/>
            <person name="Kodaira H."/>
            <person name="Kondo H."/>
            <person name="Sugawara M."/>
            <person name="Takahashi M."/>
            <person name="Kanda K."/>
            <person name="Yokoi T."/>
            <person name="Furuya T."/>
            <person name="Kikkawa E."/>
            <person name="Omura Y."/>
            <person name="Abe K."/>
            <person name="Kamihara K."/>
            <person name="Katsuta N."/>
            <person name="Sato K."/>
            <person name="Tanikawa M."/>
            <person name="Yamazaki M."/>
            <person name="Ninomiya K."/>
            <person name="Ishibashi T."/>
            <person name="Yamashita H."/>
            <person name="Murakawa K."/>
            <person name="Fujimori K."/>
            <person name="Tanai H."/>
            <person name="Kimata M."/>
            <person name="Watanabe M."/>
            <person name="Hiraoka S."/>
            <person name="Chiba Y."/>
            <person name="Ishida S."/>
            <person name="Ono Y."/>
            <person name="Takiguchi S."/>
            <person name="Watanabe S."/>
            <person name="Yosida M."/>
            <person name="Hotuta T."/>
            <person name="Kusano J."/>
            <person name="Kanehori K."/>
            <person name="Takahashi-Fujii A."/>
            <person name="Hara H."/>
            <person name="Tanase T.-O."/>
            <person name="Nomura Y."/>
            <person name="Togiya S."/>
            <person name="Komai F."/>
            <person name="Hara R."/>
            <person name="Takeuchi K."/>
            <person name="Arita M."/>
            <person name="Imose N."/>
            <person name="Musashino K."/>
            <person name="Yuuki H."/>
            <person name="Oshima A."/>
            <person name="Sasaki N."/>
            <person name="Aotsuka S."/>
            <person name="Yoshikawa Y."/>
            <person name="Matsunawa H."/>
            <person name="Ichihara T."/>
            <person name="Shiohata N."/>
            <person name="Sano S."/>
            <person name="Moriya S."/>
            <person name="Momiyama H."/>
            <person name="Satoh N."/>
            <person name="Takami S."/>
            <person name="Terashima Y."/>
            <person name="Suzuki O."/>
            <person name="Nakagawa S."/>
            <person name="Senoh A."/>
            <person name="Mizoguchi H."/>
            <person name="Goto Y."/>
            <person name="Shimizu F."/>
            <person name="Wakebe H."/>
            <person name="Hishigaki H."/>
            <person name="Watanabe T."/>
            <person name="Sugiyama A."/>
            <person name="Takemoto M."/>
            <person name="Kawakami B."/>
            <person name="Yamazaki M."/>
            <person name="Watanabe K."/>
            <person name="Kumagai A."/>
            <person name="Itakura S."/>
            <person name="Fukuzumi Y."/>
            <person name="Fujimori Y."/>
            <person name="Komiyama M."/>
            <person name="Tashiro H."/>
            <person name="Tanigami A."/>
            <person name="Fujiwara T."/>
            <person name="Ono T."/>
            <person name="Yamada K."/>
            <person name="Fujii Y."/>
            <person name="Ozaki K."/>
            <person name="Hirao M."/>
            <person name="Ohmori Y."/>
            <person name="Kawabata A."/>
            <person name="Hikiji T."/>
            <person name="Kobatake N."/>
            <person name="Inagaki H."/>
            <person name="Ikema Y."/>
            <person name="Okamoto S."/>
            <person name="Okitani R."/>
            <person name="Kawakami T."/>
            <person name="Noguchi S."/>
            <person name="Itoh T."/>
            <person name="Shigeta K."/>
            <person name="Senba T."/>
            <person name="Matsumura K."/>
            <person name="Nakajima Y."/>
            <person name="Mizuno T."/>
            <person name="Morinaga M."/>
            <person name="Sasaki M."/>
            <person name="Togashi T."/>
            <person name="Oyama M."/>
            <person name="Hata H."/>
            <person name="Watanabe M."/>
            <person name="Komatsu T."/>
            <person name="Mizushima-Sugano J."/>
            <person name="Satoh T."/>
            <person name="Shirai Y."/>
            <person name="Takahashi Y."/>
            <person name="Nakagawa K."/>
            <person name="Okumura K."/>
            <person name="Nagase T."/>
            <person name="Nomura N."/>
            <person name="Kikuchi H."/>
            <person name="Masuho Y."/>
            <person name="Yamashita R."/>
            <person name="Nakai K."/>
            <person name="Yada T."/>
            <person name="Nakamura Y."/>
            <person name="Ohara O."/>
            <person name="Isogai T."/>
            <person name="Sugano S."/>
        </authorList>
    </citation>
    <scope>NUCLEOTIDE SEQUENCE [LARGE SCALE MRNA]</scope>
    <source>
        <tissue>Thymus</tissue>
    </source>
</reference>
<reference key="8">
    <citation type="submission" date="2005-04" db="EMBL/GenBank/DDBJ databases">
        <authorList>
            <consortium name="NIEHS SNPs program"/>
        </authorList>
    </citation>
    <scope>NUCLEOTIDE SEQUENCE [GENOMIC DNA]</scope>
    <scope>VARIANTS GLU-191; SER-227 AND TRP-265</scope>
</reference>
<reference key="9">
    <citation type="submission" date="2005-09" db="EMBL/GenBank/DDBJ databases">
        <authorList>
            <person name="Mural R.J."/>
            <person name="Istrail S."/>
            <person name="Sutton G.G."/>
            <person name="Florea L."/>
            <person name="Halpern A.L."/>
            <person name="Mobarry C.M."/>
            <person name="Lippert R."/>
            <person name="Walenz B."/>
            <person name="Shatkay H."/>
            <person name="Dew I."/>
            <person name="Miller J.R."/>
            <person name="Flanigan M.J."/>
            <person name="Edwards N.J."/>
            <person name="Bolanos R."/>
            <person name="Fasulo D."/>
            <person name="Halldorsson B.V."/>
            <person name="Hannenhalli S."/>
            <person name="Turner R."/>
            <person name="Yooseph S."/>
            <person name="Lu F."/>
            <person name="Nusskern D.R."/>
            <person name="Shue B.C."/>
            <person name="Zheng X.H."/>
            <person name="Zhong F."/>
            <person name="Delcher A.L."/>
            <person name="Huson D.H."/>
            <person name="Kravitz S.A."/>
            <person name="Mouchard L."/>
            <person name="Reinert K."/>
            <person name="Remington K.A."/>
            <person name="Clark A.G."/>
            <person name="Waterman M.S."/>
            <person name="Eichler E.E."/>
            <person name="Adams M.D."/>
            <person name="Hunkapiller M.W."/>
            <person name="Myers E.W."/>
            <person name="Venter J.C."/>
        </authorList>
    </citation>
    <scope>NUCLEOTIDE SEQUENCE [LARGE SCALE GENOMIC DNA]</scope>
</reference>
<reference key="10">
    <citation type="journal article" date="2004" name="Genome Res.">
        <title>The status, quality, and expansion of the NIH full-length cDNA project: the Mammalian Gene Collection (MGC).</title>
        <authorList>
            <consortium name="The MGC Project Team"/>
        </authorList>
    </citation>
    <scope>NUCLEOTIDE SEQUENCE [LARGE SCALE MRNA]</scope>
    <source>
        <tissue>Pancreas</tissue>
    </source>
</reference>
<reference key="11">
    <citation type="journal article" date="1992" name="Eur. J. Immunol.">
        <title>Cloning and sequences of primate CD4 molecules: diversity of the cellular receptor for simian immunodeficiency virus/human immunodeficiency virus.</title>
        <authorList>
            <person name="Fomsgaard A."/>
            <person name="Hirsch V.M."/>
            <person name="Johnson P.R."/>
        </authorList>
    </citation>
    <scope>NUCLEOTIDE SEQUENCE [MRNA] OF 28-424</scope>
    <source>
        <tissue>Blood</tissue>
    </source>
</reference>
<reference key="12">
    <citation type="journal article" date="1987" name="Nature">
        <title>Interaction between CD4 and class II MHC molecules mediates cell adhesion.</title>
        <authorList>
            <person name="Doyle C."/>
            <person name="Strominger J.L."/>
        </authorList>
    </citation>
    <scope>FUNCTION</scope>
    <scope>SUBCELLULAR LOCATION</scope>
</reference>
<reference key="13">
    <citation type="journal article" date="1989" name="Immunogenetics">
        <title>Phosphorylation and down-regulation of CD4 and CD8 in human CTLs and mouse L cells.</title>
        <authorList>
            <person name="DiSanto J.P."/>
            <person name="Klein J.S."/>
            <person name="Flomenberg N."/>
        </authorList>
    </citation>
    <scope>PHOSPHORYLATION</scope>
</reference>
<reference key="14">
    <citation type="journal article" date="1989" name="J. Biol. Chem.">
        <title>Protein and carbohydrate structural analysis of a recombinant soluble CD4 receptor by mass spectrometry.</title>
        <authorList>
            <person name="Carr S.A."/>
            <person name="Hemling M.E."/>
            <person name="Folena-Wasserman G."/>
            <person name="Sweet R.W."/>
            <person name="Anumula K."/>
            <person name="Barr J.R."/>
            <person name="Huddleston M.J."/>
            <person name="Taylor P."/>
        </authorList>
    </citation>
    <scope>IDENTIFICATION BY MASS SPECTROMETRY</scope>
    <scope>DISULFIDE BOND</scope>
    <scope>GLYCOSYLATION AT ASN-296 AND ASN-325</scope>
</reference>
<reference key="15">
    <citation type="journal article" date="2004" name="Protein Sci.">
        <title>Signal peptide prediction based on analysis of experimentally verified cleavage sites.</title>
        <authorList>
            <person name="Zhang Z."/>
            <person name="Henzel W.J."/>
        </authorList>
    </citation>
    <scope>PROTEIN SEQUENCE OF 26-40</scope>
    <scope>TOPOLOGY</scope>
</reference>
<reference key="16">
    <citation type="journal article" date="1991" name="Mol. Immunol.">
        <title>A single amino acid substitution in a common African allele of the CD4 molecule ablates binding of the monoclonal antibody, OKT4.</title>
        <authorList>
            <person name="Lederman S."/>
            <person name="DeMartino J.A."/>
            <person name="Daugherty B.L."/>
            <person name="Foeldvari I."/>
            <person name="Yellin M.J."/>
            <person name="Cleary A.M."/>
            <person name="Berkowitz N."/>
            <person name="Lowy I."/>
            <person name="Braunstein N.S."/>
            <person name="Mark G.E."/>
        </authorList>
    </citation>
    <scope>NUCLEOTIDE SEQUENCE [MRNA] OF 250-280</scope>
    <scope>POLYMORPHISM</scope>
    <scope>VARIANT TRP-265</scope>
</reference>
<reference key="17">
    <citation type="journal article" date="1990" name="EMBO J.">
        <title>Structural features of the cytoplasmic region of CD4 required for internalization.</title>
        <authorList>
            <person name="Shin J."/>
            <person name="Doyle C."/>
            <person name="Yang Z."/>
            <person name="Kappes D."/>
            <person name="Strominger J.L."/>
        </authorList>
    </citation>
    <scope>PHOSPHORYLATION AT SER-433; SER-440 AND SER-456</scope>
    <scope>MUTAGENESIS OF SER-433</scope>
</reference>
<reference key="18">
    <citation type="journal article" date="1990" name="J. Virol.">
        <title>CD4 is retained in the endoplasmic reticulum by the human immunodeficiency virus type 1 glycoprotein precursor.</title>
        <authorList>
            <person name="Crise B."/>
            <person name="Buonocore L."/>
            <person name="Rose J.K."/>
        </authorList>
    </citation>
    <scope>FUNCTION (MICROBIAL INFECTION)</scope>
    <scope>INTERACTION WITH HIV-1 ENVELOPE POLYPROTEIN GP160 (MICROBIAL INFECTION)</scope>
    <scope>SUBCELLULAR LOCATION (MICROBIAL INFECTION)</scope>
</reference>
<reference key="19">
    <citation type="journal article" date="1991" name="Biochemistry">
        <title>Carbohydrate structures of recombinant soluble human CD4 expressed in Chinese hamster ovary cells.</title>
        <authorList>
            <person name="Spellman M.W."/>
            <person name="Leonard C.K."/>
            <person name="Basa L.J."/>
            <person name="Gelineo I."/>
            <person name="van Halbeek H."/>
        </authorList>
    </citation>
    <scope>GLYCOSYLATION AT ASN-296 AND ASN-325</scope>
</reference>
<reference key="20">
    <citation type="journal article" date="1991" name="J. Immunol.">
        <title>Lymphocyte chemoattractant factor induces CD4-dependent intracytoplasmic signaling in lymphocytes.</title>
        <authorList>
            <person name="Cruikshank W.W."/>
            <person name="Greenstein J.L."/>
            <person name="Theodore A.C."/>
            <person name="Center D.M."/>
        </authorList>
    </citation>
    <scope>INTERACTION WITH IL16</scope>
</reference>
<reference key="21">
    <citation type="journal article" date="1992" name="J. Biol. Chem.">
        <title>Identification of palmitoylation sites on CD4, the human immunodeficiency virus receptor.</title>
        <authorList>
            <person name="Crise B."/>
            <person name="Rose J.K."/>
        </authorList>
    </citation>
    <scope>PALMITOYLATION AT CYS-419 AND CYS-422</scope>
</reference>
<reference key="22">
    <citation type="journal article" date="1994" name="Cell">
        <title>Nef induces CD4 endocytosis: requirement for a critical dileucine motif in the membrane-proximal CD4 cytoplasmic domain.</title>
        <authorList>
            <person name="Aiken C."/>
            <person name="Konner J."/>
            <person name="Landau N.R."/>
            <person name="Lenburg M.E."/>
            <person name="Trono D."/>
        </authorList>
    </citation>
    <scope>SUBCELLULAR LOCATION (MICROBIAL INFECTION) AND MUTAGENESIS OF MET-432; SER-433; 438-LEU-LEU-439 AND SER-440</scope>
</reference>
<reference key="23">
    <citation type="journal article" date="1994" name="Immunol. Lett.">
        <title>CD4 and CD8 expression by human and mouse thymic dendritic cells.</title>
        <authorList>
            <person name="Winkel K."/>
            <person name="Sotzik F."/>
            <person name="Vremec D."/>
            <person name="Cameron P.U."/>
            <person name="Shortman K."/>
        </authorList>
    </citation>
    <scope>TISSUE SPECIFICITY</scope>
</reference>
<reference key="24">
    <citation type="journal article" date="1995" name="Proc. Natl. Acad. Sci. U.S.A.">
        <title>Oligomerization of CD4 is required for stable binding to class II major histocompatibility complex proteins but not for interaction with human immunodeficiency virus gp120.</title>
        <authorList>
            <person name="Sakihama T."/>
            <person name="Smolyar A."/>
            <person name="Reinherz E.L."/>
        </authorList>
    </citation>
    <scope>FUNCTION</scope>
    <scope>INTERACTION WITH MHCII</scope>
    <scope>INTERACTION WITH HIV-1 SURFACE PROTEIN GP120 (MICROBIAL INFECTION)</scope>
    <scope>MUTAGENESIS OF PHE-68 AND ARG-265</scope>
    <scope>DOMAIN</scope>
</reference>
<reference key="25">
    <citation type="journal article" date="1994" name="Proc. Natl. Acad. Sci. U.S.A.">
        <title>CD4 is a critical component of the receptor for human herpesvirus 7: interference with human immunodeficiency virus.</title>
        <authorList>
            <person name="Lusso P."/>
            <person name="Secchiero P."/>
            <person name="Crowley R.W."/>
            <person name="Garzino-Demo A."/>
            <person name="Berneman Z.N."/>
            <person name="Gallo R.C."/>
        </authorList>
    </citation>
    <scope>FUNCTION (MICROBIAL INFECTION)</scope>
    <scope>INTERACTION WITH HUMAN HERPESVIRUS 7 SURFACE PROTEINS</scope>
</reference>
<reference key="26">
    <citation type="journal article" date="2001" name="J. Biol. Chem.">
        <title>Cloning of ACP33 as a novel intracellular ligand of CD4.</title>
        <authorList>
            <person name="Zeitlmann L."/>
            <person name="Sirim P."/>
            <person name="Kremmer E."/>
            <person name="Kolanus W."/>
        </authorList>
    </citation>
    <scope>INTERACTION WITH SPG21</scope>
    <scope>MUTAGENESIS OF 457-PRO-ILE-458</scope>
</reference>
<reference key="27">
    <citation type="journal article" date="2002" name="Nat. Immunol.">
        <title>Disulfide exchange in domain 2 of CD4 is required for entry of HIV-1.</title>
        <authorList>
            <person name="Matthias L.J."/>
            <person name="Yam P.T."/>
            <person name="Jiang X.M."/>
            <person name="Vandegraaff N."/>
            <person name="Li P."/>
            <person name="Poumbourios P."/>
            <person name="Donoghue N."/>
            <person name="Hogg P.J."/>
        </authorList>
    </citation>
    <scope>FUNCTION (MICROBIAL INFECTION)</scope>
    <scope>SUBUNIT</scope>
    <scope>SUBCELLULAR LOCATION</scope>
</reference>
<reference key="28">
    <citation type="journal article" date="2003" name="J. Immunol.">
        <title>Lipid raft distribution of CD4 depends on its palmitoylation and association with Lck, and evidence for CD4-induced lipid raft aggregation as an additional mechanism to enhance CD3 signaling.</title>
        <authorList>
            <person name="Fragoso R."/>
            <person name="Ren D."/>
            <person name="Zhang X."/>
            <person name="Su M.W."/>
            <person name="Burakoff S.J."/>
            <person name="Jin Y.J."/>
        </authorList>
    </citation>
    <scope>SUBCELLULAR LOCATION</scope>
    <scope>INTERACTION WITH LCK</scope>
    <scope>TOPOLOGY</scope>
</reference>
<reference key="29">
    <citation type="journal article" date="2005" name="Biochemistry">
        <title>Protein minimization of the gp120 binding region of human CD4.</title>
        <authorList>
            <person name="Sharma D."/>
            <person name="Balamurali M.M."/>
            <person name="Chakraborty K."/>
            <person name="Kumaran S."/>
            <person name="Jeganathan S."/>
            <person name="Rashid U."/>
            <person name="Ingallinella P."/>
            <person name="Varadarajan R."/>
        </authorList>
    </citation>
    <scope>FUNCTION (MICROBIAL INFECTION)</scope>
    <scope>INTERACTION WITH HIV-1 SURFACE PROTEIN GP120 (MICROBIAL INFECTION)</scope>
</reference>
<reference key="30">
    <citation type="journal article" date="2006" name="EMBO Rep.">
        <title>Glucocorticoids cause rapid dissociation of a T-cell-receptor-associated protein complex containing LCK and FYN.</title>
        <authorList>
            <person name="Loewenberg M."/>
            <person name="Verhaar A.P."/>
            <person name="Bilderbeek J."/>
            <person name="Marle J.V."/>
            <person name="Buttgereit F."/>
            <person name="Peppelenbosch M.P."/>
            <person name="van Deventer S.J."/>
            <person name="Hommes D.W."/>
        </authorList>
    </citation>
    <scope>INTERACTION WITH LCK</scope>
</reference>
<reference key="31">
    <citation type="journal article" date="2006" name="J. Immunol.">
        <title>CD4 expression on activated NK cells: ligation of CD4 induces cytokine expression and cell migration.</title>
        <authorList>
            <person name="Bernstein H.B."/>
            <person name="Plasterer M.C."/>
            <person name="Schiff S.E."/>
            <person name="Kitchen C.M."/>
            <person name="Kitchen S."/>
            <person name="Zack J.A."/>
        </authorList>
    </citation>
    <scope>FUNCTION</scope>
    <scope>TISSUE SPECIFICITY</scope>
</reference>
<reference key="32">
    <citation type="journal article" date="2007" name="Curr. Mol. Med.">
        <title>Mechanisms of CD4 downregulation by the Nef and Vpu proteins of primate immunodeficiency viruses.</title>
        <authorList>
            <person name="Lindwasser O.W."/>
            <person name="Chaudhuri R."/>
            <person name="Bonifacino J.S."/>
        </authorList>
    </citation>
    <scope>FUNCTION (MICROBIAL INFECTION)</scope>
    <scope>REVIEW</scope>
</reference>
<reference key="33">
    <citation type="journal article" date="2009" name="J. Proteome Res.">
        <title>Glycoproteomics analysis of human liver tissue by combination of multiple enzyme digestion and hydrazide chemistry.</title>
        <authorList>
            <person name="Chen R."/>
            <person name="Jiang X."/>
            <person name="Sun D."/>
            <person name="Han G."/>
            <person name="Wang F."/>
            <person name="Ye M."/>
            <person name="Wang L."/>
            <person name="Zou H."/>
        </authorList>
    </citation>
    <scope>GLYCOSYLATION [LARGE SCALE ANALYSIS] AT ASN-296</scope>
    <source>
        <tissue>Liver</tissue>
    </source>
</reference>
<reference key="34">
    <citation type="journal article" date="2014" name="Clin. Microbiol. Rev.">
        <title>CD4+ T Cells: guardians of the phagosome.</title>
        <authorList>
            <person name="Tubo N.J."/>
            <person name="Jenkins M.K."/>
        </authorList>
    </citation>
    <scope>REVIEW ON FUNCTION</scope>
</reference>
<reference key="35">
    <citation type="journal article" date="2014" name="J. Virol.">
        <title>CD4 ligation on human blood monocytes triggers macrophage differentiation and enhances HIV infection.</title>
        <authorList>
            <person name="Zhen A."/>
            <person name="Krutzik S.R."/>
            <person name="Levin B.R."/>
            <person name="Kasparian S."/>
            <person name="Zack J.A."/>
            <person name="Kitchen S.G."/>
        </authorList>
    </citation>
    <scope>FUNCTION</scope>
    <scope>TISSUE SPECIFICITY</scope>
</reference>
<reference key="36">
    <citation type="journal article" date="2016" name="Proc. Natl. Acad. Sci. U.S.A.">
        <title>Remarkably low affinity of CD4/peptide-major histocompatibility complex class II protein interactions.</title>
        <authorList>
            <person name="Joensson P."/>
            <person name="Southcombe J.H."/>
            <person name="Santos A.M."/>
            <person name="Huo J."/>
            <person name="Fernandes R.A."/>
            <person name="McColl J."/>
            <person name="Lever M."/>
            <person name="Evans E.J."/>
            <person name="Hudson A."/>
            <person name="Chang V.T."/>
            <person name="Hanke T."/>
            <person name="Godkin A."/>
            <person name="Dunne P.D."/>
            <person name="Horrocks M.H."/>
            <person name="Palayret M."/>
            <person name="Screaton G.R."/>
            <person name="Petersen J."/>
            <person name="Rossjohn J."/>
            <person name="Fugger L."/>
            <person name="Dushek O."/>
            <person name="Xu X.N."/>
            <person name="Davis S.J."/>
            <person name="Klenerman D."/>
        </authorList>
    </citation>
    <scope>INTERACTION WITH MHCII</scope>
</reference>
<reference key="37">
    <citation type="journal article" date="2022" name="PLoS Negl. Trop. Dis.">
        <title>Identification of Aedes aegypti salivary gland proteins interacting with human immune receptor proteins.</title>
        <authorList>
            <person name="Gavor E."/>
            <person name="Choong Y.K."/>
            <person name="Liu Y."/>
            <person name="Pompon J."/>
            <person name="Ooi E.E."/>
            <person name="Mok Y.K."/>
            <person name="Liu H."/>
            <person name="Kini R.M."/>
            <person name="Sivaraman J."/>
        </authorList>
    </citation>
    <scope>INTERACTION WITH MOSQUITO LONG FORM SALIVARY PROTEIN D7L2; NEUTROPHIL-STIMULATING FACTOR 1 AND VENOM ALLERGEN-1</scope>
</reference>
<reference key="38">
    <citation type="journal article" date="1990" name="Nature">
        <title>Atomic structure of a fragment of human CD4 containing two immunoglobulin-like domains.</title>
        <authorList>
            <person name="Wang J."/>
            <person name="Yan Y."/>
            <person name="Garrett T.P."/>
            <person name="Liu J."/>
            <person name="Rodgers D.W."/>
            <person name="Garlick R.L."/>
            <person name="Tarr G.E."/>
            <person name="Husain Y."/>
            <person name="Reinherz E.L."/>
            <person name="Harrison S.C."/>
        </authorList>
    </citation>
    <scope>X-RAY CRYSTALLOGRAPHY (2.4 ANGSTROMS) OF 26-208</scope>
</reference>
<reference key="39">
    <citation type="journal article" date="1990" name="Nature">
        <title>Crystal structure of an HIV-binding recombinant fragment of human CD4.</title>
        <authorList>
            <person name="Ryu S.-E."/>
            <person name="Kwong P.D."/>
            <person name="Truneh A."/>
            <person name="Porter T.G."/>
            <person name="Arthos J."/>
            <person name="Rosenberg M."/>
            <person name="Dai X."/>
            <person name="Xuong N.-H."/>
            <person name="Axel R."/>
            <person name="Sweet R.W."/>
            <person name="Hendrickson W.A."/>
        </authorList>
    </citation>
    <scope>X-RAY CRYSTALLOGRAPHY (2.3 ANGSTROMS) OF 26-208</scope>
</reference>
<reference key="40">
    <citation type="journal article" date="1997" name="Nature">
        <title>Dimeric association and segmental variability in the structure of human CD4.</title>
        <authorList>
            <person name="Wu H."/>
            <person name="Kwong P.D."/>
            <person name="Hendrickson W.A."/>
        </authorList>
    </citation>
    <scope>X-RAY CRYSTALLOGRAPHY (3.9 ANGSTROMS) OF 26-388</scope>
    <scope>HOMODIMERIZATION</scope>
    <scope>INTERACTION WITH CD81</scope>
    <scope>SUBCELLULAR LOCATION</scope>
    <scope>MUTAGENESIS OF CYS-445 AND CYS-447</scope>
</reference>
<reference key="41">
    <citation type="journal article" date="1998" name="Nature">
        <title>Structure of an HIV gp120 envelope glycoprotein in complex with the CD4 receptor and a neutralizing human antibody.</title>
        <authorList>
            <person name="Kwong P.D."/>
            <person name="Wyatt R."/>
            <person name="Robinson J."/>
            <person name="Sweet R.W."/>
            <person name="Sodroski J."/>
            <person name="Hendrickson W.A."/>
        </authorList>
    </citation>
    <scope>X-RAY CRYSTALLOGRAPHY (2.5 ANGSTROMS) OF 26-208 IN COMPLEX WITH HIV SURFACE PROTEIN GP120 (MICROBIAL INFECTION)</scope>
    <scope>FUNCTION (MICROBIAL INFECTION)</scope>
</reference>
<reference key="42">
    <citation type="journal article" date="2008" name="J. Mol. Biol.">
        <title>Structural basis for the interaction between focal adhesion kinase and CD4.</title>
        <authorList>
            <person name="Garron M.L."/>
            <person name="Arthos J."/>
            <person name="Guichou J.F."/>
            <person name="McNally J."/>
            <person name="Cicala C."/>
            <person name="Arold S.T."/>
        </authorList>
    </citation>
    <scope>X-RAY CRYSTALLOGRAPHY (2.82 ANGSTROMS) OF 428-450 IN COMPLEX WITH PTK2/FAK1</scope>
    <scope>INTERACTION WITH PTK2/FAK1</scope>
</reference>
<reference key="43">
    <citation type="journal article" date="2011" name="Proc. Natl. Acad. Sci. U.S.A.">
        <title>Affinity maturation of human CD4 by yeast surface display and crystal structure of a CD4-HLA-DR1 complex.</title>
        <authorList>
            <person name="Wang X.X."/>
            <person name="Li Y."/>
            <person name="Yin Y."/>
            <person name="Mo M."/>
            <person name="Wang Q."/>
            <person name="Gao W."/>
            <person name="Wang L."/>
            <person name="Mariuzza R.A."/>
        </authorList>
    </citation>
    <scope>X-RAY CRYSTALLOGRAPHY (2.10 ANGSTROMS) OF 26-203</scope>
    <scope>INTERACTION WITH MHCII</scope>
    <scope>MUTAGENESIS OF GLN-65; THR-70; SER-85 AND ASP-88</scope>
    <scope>DOMAIN</scope>
</reference>
<reference key="44">
    <citation type="journal article" date="2019" name="Front. Immunol.">
        <title>Complete Multilineage CD4 Expression Defect Associated With Warts Due to an Inherited Homozygous CD4 Gene Mutation.</title>
        <authorList>
            <person name="Fernandes R.A."/>
            <person name="Perez-Andres M."/>
            <person name="Blanco E."/>
            <person name="Jara-Acevedo M."/>
            <person name="Criado I."/>
            <person name="Almeida J."/>
            <person name="Botafogo V."/>
            <person name="Coutinho I."/>
            <person name="Paiva A."/>
            <person name="van Dongen J.J.M."/>
            <person name="Orfao A."/>
            <person name="Faria E."/>
        </authorList>
    </citation>
    <scope>INVOLVEMENT IN IMD79</scope>
</reference>
<reference key="45">
    <citation type="journal article" date="2021" name="J. Infect. Dis.">
        <title>Lost in Translation: Lack of CD4 Expression due to a Novel Genetic Defect.</title>
        <authorList>
            <person name="Lisco A."/>
            <person name="Ye P."/>
            <person name="Wong C.S."/>
            <person name="Pei L."/>
            <person name="Hsu A.P."/>
            <person name="Mace E.M."/>
            <person name="Orange J.S."/>
            <person name="Lage S.L."/>
            <person name="Ward A.J."/>
            <person name="Migueles S.A."/>
            <person name="Connors M."/>
            <person name="Anderson M.V."/>
            <person name="Buckner C.M."/>
            <person name="Moir S."/>
            <person name="Rupert A."/>
            <person name="Dulau-Florea A."/>
            <person name="Ogbogu P."/>
            <person name="Timberlake D."/>
            <person name="Notarangelo L.D."/>
            <person name="Pittaluga S."/>
            <person name="Abraham R.S."/>
            <person name="Sereti I."/>
        </authorList>
    </citation>
    <scope>INVOLVEMENT IN IMD79</scope>
</reference>
<sequence length="458" mass="51111">MNRGVPFRHLLLVLQLALLPAATQGKKVVLGKKGDTVELTCTASQKKSIQFHWKNSNQIKILGNQGSFLTKGPSKLNDRADSRRSLWDQGNFPLIIKNLKIEDSDTYICEVEDQKEEVQLLVFGLTANSDTHLLQGQSLTLTLESPPGSSPSVQCRSPRGKNIQGGKTLSVSQLELQDSGTWTCTVLQNQKKVEFKIDIVVLAFQKASSIVYKKEGEQVEFSFPLAFTVEKLTGSGELWWQAERASSSKSWITFDLKNKEVSVKRVTQDPKLQMGKKLPLHLTLPQALPQYAGSGNLTLALEAKTGKLHQEVNLVVMRATQLQKNLTCEVWGPTSPKLMLSLKLENKEAKVSKREKAVWVLNPEAGMWQCLLSDSGQVLLESNIKVLPTWSTPVQPMALIVLGGVAGLLLFIGLGIFFCVRCRHRRRQAERMSQIKRLLSEKKTCQCPHRFQKTCSPI</sequence>
<proteinExistence type="evidence at protein level"/>
<dbReference type="EMBL" id="M12807">
    <property type="protein sequence ID" value="AAA35572.1"/>
    <property type="molecule type" value="mRNA"/>
</dbReference>
<dbReference type="EMBL" id="U47924">
    <property type="protein sequence ID" value="AAB51309.1"/>
    <property type="molecule type" value="Genomic_DNA"/>
</dbReference>
<dbReference type="EMBL" id="M35160">
    <property type="protein sequence ID" value="AAA16069.1"/>
    <property type="molecule type" value="mRNA"/>
</dbReference>
<dbReference type="EMBL" id="BT019791">
    <property type="protein sequence ID" value="AAV38594.1"/>
    <property type="molecule type" value="mRNA"/>
</dbReference>
<dbReference type="EMBL" id="BT019811">
    <property type="protein sequence ID" value="AAV38614.1"/>
    <property type="molecule type" value="mRNA"/>
</dbReference>
<dbReference type="EMBL" id="DQ012936">
    <property type="protein sequence ID" value="AAY22175.1"/>
    <property type="molecule type" value="Genomic_DNA"/>
</dbReference>
<dbReference type="EMBL" id="AK312828">
    <property type="protein sequence ID" value="BAG35684.1"/>
    <property type="molecule type" value="mRNA"/>
</dbReference>
<dbReference type="EMBL" id="CH471116">
    <property type="protein sequence ID" value="EAW88738.1"/>
    <property type="molecule type" value="Genomic_DNA"/>
</dbReference>
<dbReference type="EMBL" id="CH471116">
    <property type="protein sequence ID" value="EAW88739.1"/>
    <property type="molecule type" value="Genomic_DNA"/>
</dbReference>
<dbReference type="EMBL" id="BC025782">
    <property type="protein sequence ID" value="AAH25782.1"/>
    <property type="molecule type" value="mRNA"/>
</dbReference>
<dbReference type="CCDS" id="CCDS8562.1"/>
<dbReference type="PIR" id="A90872">
    <property type="entry name" value="RWHUT4"/>
</dbReference>
<dbReference type="RefSeq" id="NP_000607.1">
    <property type="nucleotide sequence ID" value="NM_000616.5"/>
</dbReference>
<dbReference type="RefSeq" id="NP_001369636.1">
    <property type="nucleotide sequence ID" value="NM_001382707.1"/>
</dbReference>
<dbReference type="PDB" id="1CDH">
    <property type="method" value="X-ray"/>
    <property type="resolution" value="2.30 A"/>
    <property type="chains" value="A=26-203"/>
</dbReference>
<dbReference type="PDB" id="1CDI">
    <property type="method" value="X-ray"/>
    <property type="resolution" value="2.90 A"/>
    <property type="chains" value="A=26-203"/>
</dbReference>
<dbReference type="PDB" id="1CDJ">
    <property type="method" value="X-ray"/>
    <property type="resolution" value="2.50 A"/>
    <property type="chains" value="A=26-203"/>
</dbReference>
<dbReference type="PDB" id="1CDU">
    <property type="method" value="X-ray"/>
    <property type="resolution" value="2.70 A"/>
    <property type="chains" value="A=26-203"/>
</dbReference>
<dbReference type="PDB" id="1CDY">
    <property type="method" value="X-ray"/>
    <property type="resolution" value="2.00 A"/>
    <property type="chains" value="A=26-203"/>
</dbReference>
<dbReference type="PDB" id="1G9M">
    <property type="method" value="X-ray"/>
    <property type="resolution" value="2.20 A"/>
    <property type="chains" value="C=26-208"/>
</dbReference>
<dbReference type="PDB" id="1G9N">
    <property type="method" value="X-ray"/>
    <property type="resolution" value="2.90 A"/>
    <property type="chains" value="C=26-208"/>
</dbReference>
<dbReference type="PDB" id="1GC1">
    <property type="method" value="X-ray"/>
    <property type="resolution" value="2.50 A"/>
    <property type="chains" value="C=26-206"/>
</dbReference>
<dbReference type="PDB" id="1JL4">
    <property type="method" value="X-ray"/>
    <property type="resolution" value="4.30 A"/>
    <property type="chains" value="D=26-203"/>
</dbReference>
<dbReference type="PDB" id="1Q68">
    <property type="method" value="NMR"/>
    <property type="chains" value="A=421-458"/>
</dbReference>
<dbReference type="PDB" id="1RZJ">
    <property type="method" value="X-ray"/>
    <property type="resolution" value="2.20 A"/>
    <property type="chains" value="C=26-208"/>
</dbReference>
<dbReference type="PDB" id="1RZK">
    <property type="method" value="X-ray"/>
    <property type="resolution" value="2.90 A"/>
    <property type="chains" value="C=26-208"/>
</dbReference>
<dbReference type="PDB" id="1WBR">
    <property type="method" value="NMR"/>
    <property type="chains" value="A=428-444"/>
</dbReference>
<dbReference type="PDB" id="1WIO">
    <property type="method" value="X-ray"/>
    <property type="resolution" value="3.90 A"/>
    <property type="chains" value="A/B=26-388"/>
</dbReference>
<dbReference type="PDB" id="1WIP">
    <property type="method" value="X-ray"/>
    <property type="resolution" value="4.00 A"/>
    <property type="chains" value="A/B=26-388"/>
</dbReference>
<dbReference type="PDB" id="1WIQ">
    <property type="method" value="X-ray"/>
    <property type="resolution" value="5.00 A"/>
    <property type="chains" value="A/B=26-388"/>
</dbReference>
<dbReference type="PDB" id="2B4C">
    <property type="method" value="X-ray"/>
    <property type="resolution" value="3.30 A"/>
    <property type="chains" value="C=26-206"/>
</dbReference>
<dbReference type="PDB" id="2JKR">
    <property type="method" value="X-ray"/>
    <property type="resolution" value="2.98 A"/>
    <property type="chains" value="P/Q=431-441"/>
</dbReference>
<dbReference type="PDB" id="2JKT">
    <property type="method" value="X-ray"/>
    <property type="resolution" value="3.40 A"/>
    <property type="chains" value="P/Q=435-441"/>
</dbReference>
<dbReference type="PDB" id="2KLU">
    <property type="method" value="NMR"/>
    <property type="chains" value="A=397-458"/>
</dbReference>
<dbReference type="PDB" id="2NXY">
    <property type="method" value="X-ray"/>
    <property type="resolution" value="2.00 A"/>
    <property type="chains" value="B=26-208"/>
</dbReference>
<dbReference type="PDB" id="2NXZ">
    <property type="method" value="X-ray"/>
    <property type="resolution" value="2.04 A"/>
    <property type="chains" value="B=26-208"/>
</dbReference>
<dbReference type="PDB" id="2NY0">
    <property type="method" value="X-ray"/>
    <property type="resolution" value="2.20 A"/>
    <property type="chains" value="B=26-208"/>
</dbReference>
<dbReference type="PDB" id="2NY1">
    <property type="method" value="X-ray"/>
    <property type="resolution" value="1.99 A"/>
    <property type="chains" value="B=26-208"/>
</dbReference>
<dbReference type="PDB" id="2NY2">
    <property type="method" value="X-ray"/>
    <property type="resolution" value="2.00 A"/>
    <property type="chains" value="B=26-208"/>
</dbReference>
<dbReference type="PDB" id="2NY3">
    <property type="method" value="X-ray"/>
    <property type="resolution" value="2.00 A"/>
    <property type="chains" value="B=26-208"/>
</dbReference>
<dbReference type="PDB" id="2NY4">
    <property type="method" value="X-ray"/>
    <property type="resolution" value="2.00 A"/>
    <property type="chains" value="B=26-208"/>
</dbReference>
<dbReference type="PDB" id="2NY5">
    <property type="method" value="X-ray"/>
    <property type="resolution" value="2.50 A"/>
    <property type="chains" value="C=26-208"/>
</dbReference>
<dbReference type="PDB" id="2NY6">
    <property type="method" value="X-ray"/>
    <property type="resolution" value="2.80 A"/>
    <property type="chains" value="B=26-208"/>
</dbReference>
<dbReference type="PDB" id="2QAD">
    <property type="method" value="X-ray"/>
    <property type="resolution" value="3.30 A"/>
    <property type="chains" value="B/F=26-206"/>
</dbReference>
<dbReference type="PDB" id="3B71">
    <property type="method" value="X-ray"/>
    <property type="resolution" value="2.82 A"/>
    <property type="chains" value="D/E/F=428-450"/>
</dbReference>
<dbReference type="PDB" id="3CD4">
    <property type="method" value="X-ray"/>
    <property type="resolution" value="2.20 A"/>
    <property type="chains" value="A=26-207"/>
</dbReference>
<dbReference type="PDB" id="3J70">
    <property type="method" value="EM"/>
    <property type="chains" value="C/O/T=26-208"/>
</dbReference>
<dbReference type="PDB" id="3JCB">
    <property type="method" value="EM"/>
    <property type="chains" value="D=26-200"/>
</dbReference>
<dbReference type="PDB" id="3JCC">
    <property type="method" value="EM"/>
    <property type="chains" value="D=26-200"/>
</dbReference>
<dbReference type="PDB" id="3JWD">
    <property type="method" value="X-ray"/>
    <property type="resolution" value="2.61 A"/>
    <property type="chains" value="C/D=26-208"/>
</dbReference>
<dbReference type="PDB" id="3JWO">
    <property type="method" value="X-ray"/>
    <property type="resolution" value="3.51 A"/>
    <property type="chains" value="C=26-208"/>
</dbReference>
<dbReference type="PDB" id="3LQA">
    <property type="method" value="X-ray"/>
    <property type="resolution" value="3.40 A"/>
    <property type="chains" value="C=26-207"/>
</dbReference>
<dbReference type="PDB" id="3O2D">
    <property type="method" value="X-ray"/>
    <property type="resolution" value="2.19 A"/>
    <property type="chains" value="A=26-207"/>
</dbReference>
<dbReference type="PDB" id="3S4S">
    <property type="method" value="X-ray"/>
    <property type="resolution" value="2.40 A"/>
    <property type="chains" value="G/H=26-203"/>
</dbReference>
<dbReference type="PDB" id="3S5L">
    <property type="method" value="X-ray"/>
    <property type="resolution" value="2.10 A"/>
    <property type="chains" value="G/H=26-203"/>
</dbReference>
<dbReference type="PDB" id="3T0E">
    <property type="method" value="X-ray"/>
    <property type="resolution" value="4.00 A"/>
    <property type="chains" value="E=26-388"/>
</dbReference>
<dbReference type="PDB" id="4H8W">
    <property type="method" value="X-ray"/>
    <property type="resolution" value="1.85 A"/>
    <property type="chains" value="C=26-208"/>
</dbReference>
<dbReference type="PDB" id="4JM2">
    <property type="method" value="X-ray"/>
    <property type="resolution" value="3.10 A"/>
    <property type="chains" value="F=26-208"/>
</dbReference>
<dbReference type="PDB" id="4P9H">
    <property type="method" value="X-ray"/>
    <property type="resolution" value="3.00 A"/>
    <property type="chains" value="C=26-207"/>
</dbReference>
<dbReference type="PDB" id="4Q6I">
    <property type="method" value="X-ray"/>
    <property type="resolution" value="3.65 A"/>
    <property type="chains" value="C/I/J/K=1-208"/>
</dbReference>
<dbReference type="PDB" id="4R2G">
    <property type="method" value="X-ray"/>
    <property type="resolution" value="3.28 A"/>
    <property type="chains" value="B/F/H/L=26-208"/>
</dbReference>
<dbReference type="PDB" id="4R4H">
    <property type="method" value="X-ray"/>
    <property type="resolution" value="4.28 A"/>
    <property type="chains" value="B=26-203"/>
</dbReference>
<dbReference type="PDB" id="4RQS">
    <property type="method" value="X-ray"/>
    <property type="resolution" value="4.49 A"/>
    <property type="chains" value="B=26-208"/>
</dbReference>
<dbReference type="PDB" id="5A7X">
    <property type="method" value="EM"/>
    <property type="resolution" value="17.00 A"/>
    <property type="chains" value="B/F/J=26-206"/>
</dbReference>
<dbReference type="PDB" id="5A8H">
    <property type="method" value="EM"/>
    <property type="resolution" value="23.00 A"/>
    <property type="chains" value="B/H/N=26-208"/>
</dbReference>
<dbReference type="PDB" id="5CAY">
    <property type="method" value="X-ray"/>
    <property type="resolution" value="3.00 A"/>
    <property type="chains" value="B=26-208"/>
</dbReference>
<dbReference type="PDB" id="5THR">
    <property type="method" value="EM"/>
    <property type="resolution" value="8.90 A"/>
    <property type="chains" value="G/H/I=26-207"/>
</dbReference>
<dbReference type="PDB" id="5U1F">
    <property type="method" value="EM"/>
    <property type="resolution" value="6.80 A"/>
    <property type="chains" value="M=26-388"/>
</dbReference>
<dbReference type="PDB" id="5VN3">
    <property type="method" value="EM"/>
    <property type="resolution" value="3.70 A"/>
    <property type="chains" value="C/E/F=26-208"/>
</dbReference>
<dbReference type="PDB" id="6CM3">
    <property type="method" value="EM"/>
    <property type="resolution" value="3.54 A"/>
    <property type="chains" value="G/H/I=26-207"/>
</dbReference>
<dbReference type="PDB" id="6EDU">
    <property type="method" value="EM"/>
    <property type="resolution" value="4.06 A"/>
    <property type="chains" value="G/H/I=26-208"/>
</dbReference>
<dbReference type="PDB" id="6L1Y">
    <property type="method" value="X-ray"/>
    <property type="resolution" value="2.47 A"/>
    <property type="chains" value="C=26-202"/>
</dbReference>
<dbReference type="PDB" id="6MEO">
    <property type="method" value="EM"/>
    <property type="resolution" value="3.90 A"/>
    <property type="chains" value="A=26-201"/>
</dbReference>
<dbReference type="PDB" id="6MET">
    <property type="method" value="EM"/>
    <property type="resolution" value="4.50 A"/>
    <property type="chains" value="A=26-388"/>
</dbReference>
<dbReference type="PDB" id="6OPN">
    <property type="method" value="EM"/>
    <property type="resolution" value="3.50 A"/>
    <property type="chains" value="C/F/I=25-203"/>
</dbReference>
<dbReference type="PDB" id="6OPO">
    <property type="method" value="EM"/>
    <property type="resolution" value="3.50 A"/>
    <property type="chains" value="C/G/N=25-203"/>
</dbReference>
<dbReference type="PDB" id="6OPP">
    <property type="method" value="EM"/>
    <property type="resolution" value="3.70 A"/>
    <property type="chains" value="C/F/M=25-203"/>
</dbReference>
<dbReference type="PDB" id="6OPQ">
    <property type="method" value="EM"/>
    <property type="resolution" value="3.80 A"/>
    <property type="chains" value="C/I/J=25-203"/>
</dbReference>
<dbReference type="PDB" id="6QH6">
    <property type="method" value="X-ray"/>
    <property type="resolution" value="5.00 A"/>
    <property type="chains" value="Q=431-440"/>
</dbReference>
<dbReference type="PDB" id="6QH7">
    <property type="method" value="X-ray"/>
    <property type="resolution" value="3.40 A"/>
    <property type="chains" value="Q=431-440"/>
</dbReference>
<dbReference type="PDB" id="6U0L">
    <property type="method" value="EM"/>
    <property type="resolution" value="3.30 A"/>
    <property type="chains" value="D/E/F=26-207"/>
</dbReference>
<dbReference type="PDB" id="6U0N">
    <property type="method" value="EM"/>
    <property type="resolution" value="3.50 A"/>
    <property type="chains" value="D/E/F=26-207"/>
</dbReference>
<dbReference type="PDB" id="6URI">
    <property type="method" value="X-ray"/>
    <property type="resolution" value="3.00 A"/>
    <property type="chains" value="D=419-444"/>
</dbReference>
<dbReference type="PDB" id="6X5B">
    <property type="method" value="EM"/>
    <property type="resolution" value="3.60 A"/>
    <property type="chains" value="C/G/N=25-203"/>
</dbReference>
<dbReference type="PDB" id="6X5C">
    <property type="method" value="EM"/>
    <property type="resolution" value="4.04 A"/>
    <property type="chains" value="C/I/J=25-203"/>
</dbReference>
<dbReference type="PDB" id="7T0O">
    <property type="method" value="EM"/>
    <property type="resolution" value="8.70 A"/>
    <property type="chains" value="H/L/M=26-389"/>
</dbReference>
<dbReference type="PDB" id="7T0R">
    <property type="method" value="X-ray"/>
    <property type="resolution" value="3.65 A"/>
    <property type="chains" value="A/D=26-389"/>
</dbReference>
<dbReference type="PDB" id="7TXD">
    <property type="method" value="EM"/>
    <property type="resolution" value="3.87 A"/>
    <property type="chains" value="G/H/I=26-208"/>
</dbReference>
<dbReference type="PDB" id="8D5C">
    <property type="method" value="EM"/>
    <property type="resolution" value="3.90 A"/>
    <property type="chains" value="D/E/F=26-208"/>
</dbReference>
<dbReference type="PDB" id="8FYI">
    <property type="method" value="EM"/>
    <property type="resolution" value="3.40 A"/>
    <property type="chains" value="Z=26-396"/>
</dbReference>
<dbReference type="PDB" id="8FYJ">
    <property type="method" value="EM"/>
    <property type="resolution" value="4.00 A"/>
    <property type="chains" value="Y/Z=26-396"/>
</dbReference>
<dbReference type="PDB" id="8W90">
    <property type="method" value="X-ray"/>
    <property type="resolution" value="1.81 A"/>
    <property type="chains" value="B/D/F=26-203"/>
</dbReference>
<dbReference type="PDB" id="8Z7N">
    <property type="method" value="EM"/>
    <property type="resolution" value="3.58 A"/>
    <property type="chains" value="C/F/I=1-392"/>
</dbReference>
<dbReference type="PDBsum" id="1CDH"/>
<dbReference type="PDBsum" id="1CDI"/>
<dbReference type="PDBsum" id="1CDJ"/>
<dbReference type="PDBsum" id="1CDU"/>
<dbReference type="PDBsum" id="1CDY"/>
<dbReference type="PDBsum" id="1G9M"/>
<dbReference type="PDBsum" id="1G9N"/>
<dbReference type="PDBsum" id="1GC1"/>
<dbReference type="PDBsum" id="1JL4"/>
<dbReference type="PDBsum" id="1Q68"/>
<dbReference type="PDBsum" id="1RZJ"/>
<dbReference type="PDBsum" id="1RZK"/>
<dbReference type="PDBsum" id="1WBR"/>
<dbReference type="PDBsum" id="1WIO"/>
<dbReference type="PDBsum" id="1WIP"/>
<dbReference type="PDBsum" id="1WIQ"/>
<dbReference type="PDBsum" id="2B4C"/>
<dbReference type="PDBsum" id="2JKR"/>
<dbReference type="PDBsum" id="2JKT"/>
<dbReference type="PDBsum" id="2KLU"/>
<dbReference type="PDBsum" id="2NXY"/>
<dbReference type="PDBsum" id="2NXZ"/>
<dbReference type="PDBsum" id="2NY0"/>
<dbReference type="PDBsum" id="2NY1"/>
<dbReference type="PDBsum" id="2NY2"/>
<dbReference type="PDBsum" id="2NY3"/>
<dbReference type="PDBsum" id="2NY4"/>
<dbReference type="PDBsum" id="2NY5"/>
<dbReference type="PDBsum" id="2NY6"/>
<dbReference type="PDBsum" id="2QAD"/>
<dbReference type="PDBsum" id="3B71"/>
<dbReference type="PDBsum" id="3CD4"/>
<dbReference type="PDBsum" id="3J70"/>
<dbReference type="PDBsum" id="3JCB"/>
<dbReference type="PDBsum" id="3JCC"/>
<dbReference type="PDBsum" id="3JWD"/>
<dbReference type="PDBsum" id="3JWO"/>
<dbReference type="PDBsum" id="3LQA"/>
<dbReference type="PDBsum" id="3O2D"/>
<dbReference type="PDBsum" id="3S4S"/>
<dbReference type="PDBsum" id="3S5L"/>
<dbReference type="PDBsum" id="3T0E"/>
<dbReference type="PDBsum" id="4H8W"/>
<dbReference type="PDBsum" id="4JM2"/>
<dbReference type="PDBsum" id="4P9H"/>
<dbReference type="PDBsum" id="4Q6I"/>
<dbReference type="PDBsum" id="4R2G"/>
<dbReference type="PDBsum" id="4R4H"/>
<dbReference type="PDBsum" id="4RQS"/>
<dbReference type="PDBsum" id="5A7X"/>
<dbReference type="PDBsum" id="5A8H"/>
<dbReference type="PDBsum" id="5CAY"/>
<dbReference type="PDBsum" id="5THR"/>
<dbReference type="PDBsum" id="5U1F"/>
<dbReference type="PDBsum" id="5VN3"/>
<dbReference type="PDBsum" id="6CM3"/>
<dbReference type="PDBsum" id="6EDU"/>
<dbReference type="PDBsum" id="6L1Y"/>
<dbReference type="PDBsum" id="6MEO"/>
<dbReference type="PDBsum" id="6MET"/>
<dbReference type="PDBsum" id="6OPN"/>
<dbReference type="PDBsum" id="6OPO"/>
<dbReference type="PDBsum" id="6OPP"/>
<dbReference type="PDBsum" id="6OPQ"/>
<dbReference type="PDBsum" id="6QH6"/>
<dbReference type="PDBsum" id="6QH7"/>
<dbReference type="PDBsum" id="6U0L"/>
<dbReference type="PDBsum" id="6U0N"/>
<dbReference type="PDBsum" id="6URI"/>
<dbReference type="PDBsum" id="6X5B"/>
<dbReference type="PDBsum" id="6X5C"/>
<dbReference type="PDBsum" id="7T0O"/>
<dbReference type="PDBsum" id="7T0R"/>
<dbReference type="PDBsum" id="7TXD"/>
<dbReference type="PDBsum" id="8D5C"/>
<dbReference type="PDBsum" id="8FYI"/>
<dbReference type="PDBsum" id="8FYJ"/>
<dbReference type="PDBsum" id="8W90"/>
<dbReference type="PDBsum" id="8Z7N"/>
<dbReference type="EMDB" id="EMD-20150"/>
<dbReference type="EMDB" id="EMD-20151"/>
<dbReference type="EMDB" id="EMD-20152"/>
<dbReference type="EMDB" id="EMD-20153"/>
<dbReference type="EMDB" id="EMD-20605"/>
<dbReference type="EMDB" id="EMD-20608"/>
<dbReference type="EMDB" id="EMD-22048"/>
<dbReference type="EMDB" id="EMD-22049"/>
<dbReference type="EMDB" id="EMD-25581"/>
<dbReference type="EMDB" id="EMD-26157"/>
<dbReference type="EMDB" id="EMD-27208"/>
<dbReference type="EMDB" id="EMD-29579"/>
<dbReference type="EMDB" id="EMD-29580"/>
<dbReference type="EMDB" id="EMD-39820"/>
<dbReference type="EMDB" id="EMD-6542"/>
<dbReference type="EMDB" id="EMD-6543"/>
<dbReference type="EMDB" id="EMD-7516"/>
<dbReference type="EMDB" id="EMD-8407"/>
<dbReference type="EMDB" id="EMD-8713"/>
<dbReference type="EMDB" id="EMD-8715"/>
<dbReference type="EMDB" id="EMD-8729"/>
<dbReference type="EMDB" id="EMD-8730"/>
<dbReference type="EMDB" id="EMD-9038"/>
<dbReference type="EMDB" id="EMD-9108"/>
<dbReference type="EMDB" id="EMD-9109"/>
<dbReference type="SMR" id="P01730"/>
<dbReference type="BioGRID" id="107358">
    <property type="interactions" value="99"/>
</dbReference>
<dbReference type="ComplexPortal" id="CPX-10161">
    <property type="entry name" value="Interleukin-16 receptor-ligand complex"/>
</dbReference>
<dbReference type="CORUM" id="P01730"/>
<dbReference type="DIP" id="DIP-617N"/>
<dbReference type="ELM" id="P01730"/>
<dbReference type="FunCoup" id="P01730">
    <property type="interactions" value="703"/>
</dbReference>
<dbReference type="IntAct" id="P01730">
    <property type="interactions" value="40"/>
</dbReference>
<dbReference type="MINT" id="P01730"/>
<dbReference type="STRING" id="9606.ENSP00000011653"/>
<dbReference type="BindingDB" id="P01730"/>
<dbReference type="ChEMBL" id="CHEMBL2754"/>
<dbReference type="DrugBank" id="DB00098">
    <property type="generic name" value="Antithymocyte immunoglobulin (rabbit)"/>
</dbReference>
<dbReference type="DrugBank" id="DB06241">
    <property type="generic name" value="Clenoliximab"/>
</dbReference>
<dbReference type="DrugBank" id="DB12698">
    <property type="generic name" value="Ibalizumab"/>
</dbReference>
<dbReference type="DrugCentral" id="P01730"/>
<dbReference type="TCDB" id="8.A.23.2.1">
    <property type="family name" value="the basigin (basigin) family"/>
</dbReference>
<dbReference type="GlyConnect" id="587">
    <property type="glycosylation" value="31 N-Linked glycans (2 sites)"/>
</dbReference>
<dbReference type="GlyCosmos" id="P01730">
    <property type="glycosylation" value="2 sites, 54 glycans"/>
</dbReference>
<dbReference type="GlyGen" id="P01730">
    <property type="glycosylation" value="11 sites, 56 N-linked glycans (3 sites)"/>
</dbReference>
<dbReference type="iPTMnet" id="P01730"/>
<dbReference type="PhosphoSitePlus" id="P01730"/>
<dbReference type="SwissPalm" id="P01730"/>
<dbReference type="BioMuta" id="CD4"/>
<dbReference type="DMDM" id="116013"/>
<dbReference type="jPOST" id="P01730"/>
<dbReference type="MassIVE" id="P01730"/>
<dbReference type="PaxDb" id="9606-ENSP00000011653"/>
<dbReference type="PeptideAtlas" id="P01730"/>
<dbReference type="ProteomicsDB" id="51451"/>
<dbReference type="ABCD" id="P01730">
    <property type="antibodies" value="57 sequenced antibodies"/>
</dbReference>
<dbReference type="Antibodypedia" id="1341">
    <property type="antibodies" value="7109 antibodies from 62 providers"/>
</dbReference>
<dbReference type="CPTC" id="P01730">
    <property type="antibodies" value="4 antibodies"/>
</dbReference>
<dbReference type="DNASU" id="920"/>
<dbReference type="Ensembl" id="ENST00000011653.9">
    <property type="protein sequence ID" value="ENSP00000011653.4"/>
    <property type="gene ID" value="ENSG00000010610.10"/>
</dbReference>
<dbReference type="GeneID" id="920"/>
<dbReference type="KEGG" id="hsa:920"/>
<dbReference type="MANE-Select" id="ENST00000011653.9">
    <property type="protein sequence ID" value="ENSP00000011653.4"/>
    <property type="RefSeq nucleotide sequence ID" value="NM_000616.5"/>
    <property type="RefSeq protein sequence ID" value="NP_000607.1"/>
</dbReference>
<dbReference type="UCSC" id="uc001qqv.3">
    <property type="organism name" value="human"/>
</dbReference>
<dbReference type="AGR" id="HGNC:1678"/>
<dbReference type="CTD" id="920"/>
<dbReference type="DisGeNET" id="920"/>
<dbReference type="GeneCards" id="CD4"/>
<dbReference type="HGNC" id="HGNC:1678">
    <property type="gene designation" value="CD4"/>
</dbReference>
<dbReference type="HPA" id="ENSG00000010610">
    <property type="expression patterns" value="Tissue enhanced (liver, lymphoid tissue, parathyroid gland)"/>
</dbReference>
<dbReference type="MalaCards" id="CD4"/>
<dbReference type="MIM" id="186940">
    <property type="type" value="gene"/>
</dbReference>
<dbReference type="MIM" id="613949">
    <property type="type" value="phenotype"/>
</dbReference>
<dbReference type="MIM" id="619238">
    <property type="type" value="phenotype"/>
</dbReference>
<dbReference type="neXtProt" id="NX_P01730"/>
<dbReference type="OpenTargets" id="ENSG00000010610"/>
<dbReference type="PharmGKB" id="PA26220"/>
<dbReference type="VEuPathDB" id="HostDB:ENSG00000010610"/>
<dbReference type="eggNOG" id="ENOG502S0W5">
    <property type="taxonomic scope" value="Eukaryota"/>
</dbReference>
<dbReference type="GeneTree" id="ENSGT00390000001745"/>
<dbReference type="HOGENOM" id="CLU_047414_0_0_1"/>
<dbReference type="InParanoid" id="P01730"/>
<dbReference type="OMA" id="KTCQCSH"/>
<dbReference type="OrthoDB" id="8657369at2759"/>
<dbReference type="PAN-GO" id="P01730">
    <property type="GO annotations" value="7 GO annotations based on evolutionary models"/>
</dbReference>
<dbReference type="PhylomeDB" id="P01730"/>
<dbReference type="TreeFam" id="TF335974"/>
<dbReference type="PathwayCommons" id="P01730"/>
<dbReference type="Reactome" id="R-HSA-1462054">
    <property type="pathway name" value="Alpha-defensins"/>
</dbReference>
<dbReference type="Reactome" id="R-HSA-167590">
    <property type="pathway name" value="Nef Mediated CD4 Down-regulation"/>
</dbReference>
<dbReference type="Reactome" id="R-HSA-173107">
    <property type="pathway name" value="Binding and entry of HIV virion"/>
</dbReference>
<dbReference type="Reactome" id="R-HSA-180534">
    <property type="pathway name" value="Vpu mediated degradation of CD4"/>
</dbReference>
<dbReference type="Reactome" id="R-HSA-202424">
    <property type="pathway name" value="Downstream TCR signaling"/>
</dbReference>
<dbReference type="Reactome" id="R-HSA-202427">
    <property type="pathway name" value="Phosphorylation of CD3 and TCR zeta chains"/>
</dbReference>
<dbReference type="Reactome" id="R-HSA-202430">
    <property type="pathway name" value="Translocation of ZAP-70 to Immunological synapse"/>
</dbReference>
<dbReference type="Reactome" id="R-HSA-202433">
    <property type="pathway name" value="Generation of second messenger molecules"/>
</dbReference>
<dbReference type="Reactome" id="R-HSA-389948">
    <property type="pathway name" value="Co-inhibition by PD-1"/>
</dbReference>
<dbReference type="Reactome" id="R-HSA-449836">
    <property type="pathway name" value="Other interleukin signaling"/>
</dbReference>
<dbReference type="Reactome" id="R-HSA-8856825">
    <property type="pathway name" value="Cargo recognition for clathrin-mediated endocytosis"/>
</dbReference>
<dbReference type="Reactome" id="R-HSA-8856828">
    <property type="pathway name" value="Clathrin-mediated endocytosis"/>
</dbReference>
<dbReference type="SignaLink" id="P01730"/>
<dbReference type="SIGNOR" id="P01730"/>
<dbReference type="BioGRID-ORCS" id="920">
    <property type="hits" value="22 hits in 1160 CRISPR screens"/>
</dbReference>
<dbReference type="ChiTaRS" id="CD4">
    <property type="organism name" value="human"/>
</dbReference>
<dbReference type="EvolutionaryTrace" id="P01730"/>
<dbReference type="GeneWiki" id="CD4"/>
<dbReference type="GenomeRNAi" id="920"/>
<dbReference type="Pharos" id="P01730">
    <property type="development level" value="Tclin"/>
</dbReference>
<dbReference type="PRO" id="PR:P01730"/>
<dbReference type="Proteomes" id="UP000005640">
    <property type="component" value="Chromosome 12"/>
</dbReference>
<dbReference type="RNAct" id="P01730">
    <property type="molecule type" value="protein"/>
</dbReference>
<dbReference type="Bgee" id="ENSG00000010610">
    <property type="expression patterns" value="Expressed in granulocyte and 167 other cell types or tissues"/>
</dbReference>
<dbReference type="ExpressionAtlas" id="P01730">
    <property type="expression patterns" value="baseline and differential"/>
</dbReference>
<dbReference type="GO" id="GO:0030669">
    <property type="term" value="C:clathrin-coated endocytic vesicle membrane"/>
    <property type="evidence" value="ECO:0000304"/>
    <property type="project" value="Reactome"/>
</dbReference>
<dbReference type="GO" id="GO:0005769">
    <property type="term" value="C:early endosome"/>
    <property type="evidence" value="ECO:0000304"/>
    <property type="project" value="Reactome"/>
</dbReference>
<dbReference type="GO" id="GO:0005788">
    <property type="term" value="C:endoplasmic reticulum lumen"/>
    <property type="evidence" value="ECO:0007669"/>
    <property type="project" value="Ensembl"/>
</dbReference>
<dbReference type="GO" id="GO:0005789">
    <property type="term" value="C:endoplasmic reticulum membrane"/>
    <property type="evidence" value="ECO:0000304"/>
    <property type="project" value="Reactome"/>
</dbReference>
<dbReference type="GO" id="GO:0009897">
    <property type="term" value="C:external side of plasma membrane"/>
    <property type="evidence" value="ECO:0000314"/>
    <property type="project" value="MGI"/>
</dbReference>
<dbReference type="GO" id="GO:0045121">
    <property type="term" value="C:membrane raft"/>
    <property type="evidence" value="ECO:0000314"/>
    <property type="project" value="UniProtKB"/>
</dbReference>
<dbReference type="GO" id="GO:0005886">
    <property type="term" value="C:plasma membrane"/>
    <property type="evidence" value="ECO:0000314"/>
    <property type="project" value="UniProtKB"/>
</dbReference>
<dbReference type="GO" id="GO:0042101">
    <property type="term" value="C:T cell receptor complex"/>
    <property type="evidence" value="ECO:0000303"/>
    <property type="project" value="UniProtKB"/>
</dbReference>
<dbReference type="GO" id="GO:0015026">
    <property type="term" value="F:coreceptor activity"/>
    <property type="evidence" value="ECO:0000304"/>
    <property type="project" value="ProtInc"/>
</dbReference>
<dbReference type="GO" id="GO:0019899">
    <property type="term" value="F:enzyme binding"/>
    <property type="evidence" value="ECO:0000353"/>
    <property type="project" value="UniProtKB"/>
</dbReference>
<dbReference type="GO" id="GO:0005201">
    <property type="term" value="F:extracellular matrix structural constituent"/>
    <property type="evidence" value="ECO:0000303"/>
    <property type="project" value="UniProtKB"/>
</dbReference>
<dbReference type="GO" id="GO:0042802">
    <property type="term" value="F:identical protein binding"/>
    <property type="evidence" value="ECO:0000353"/>
    <property type="project" value="IntAct"/>
</dbReference>
<dbReference type="GO" id="GO:0019865">
    <property type="term" value="F:immunoglobulin binding"/>
    <property type="evidence" value="ECO:0007669"/>
    <property type="project" value="Ensembl"/>
</dbReference>
<dbReference type="GO" id="GO:0042011">
    <property type="term" value="F:interleukin-16 binding"/>
    <property type="evidence" value="ECO:0000353"/>
    <property type="project" value="CAFA"/>
</dbReference>
<dbReference type="GO" id="GO:0042012">
    <property type="term" value="F:interleukin-16 receptor activity"/>
    <property type="evidence" value="ECO:0000314"/>
    <property type="project" value="CAFA"/>
</dbReference>
<dbReference type="GO" id="GO:0008289">
    <property type="term" value="F:lipid binding"/>
    <property type="evidence" value="ECO:0000269"/>
    <property type="project" value="DisProt"/>
</dbReference>
<dbReference type="GO" id="GO:0042289">
    <property type="term" value="F:MHC class II protein binding"/>
    <property type="evidence" value="ECO:0000314"/>
    <property type="project" value="UniProtKB"/>
</dbReference>
<dbReference type="GO" id="GO:0023026">
    <property type="term" value="F:MHC class II protein complex binding"/>
    <property type="evidence" value="ECO:0000314"/>
    <property type="project" value="UniProtKB"/>
</dbReference>
<dbReference type="GO" id="GO:0042803">
    <property type="term" value="F:protein homodimerization activity"/>
    <property type="evidence" value="ECO:0000314"/>
    <property type="project" value="UniProtKB"/>
</dbReference>
<dbReference type="GO" id="GO:0019901">
    <property type="term" value="F:protein kinase binding"/>
    <property type="evidence" value="ECO:0000353"/>
    <property type="project" value="UniProtKB"/>
</dbReference>
<dbReference type="GO" id="GO:1990782">
    <property type="term" value="F:protein tyrosine kinase binding"/>
    <property type="evidence" value="ECO:0000353"/>
    <property type="project" value="UniProtKB"/>
</dbReference>
<dbReference type="GO" id="GO:0038023">
    <property type="term" value="F:signaling receptor activity"/>
    <property type="evidence" value="ECO:0000304"/>
    <property type="project" value="ProtInc"/>
</dbReference>
<dbReference type="GO" id="GO:0004888">
    <property type="term" value="F:transmembrane signaling receptor activity"/>
    <property type="evidence" value="ECO:0000304"/>
    <property type="project" value="ProtInc"/>
</dbReference>
<dbReference type="GO" id="GO:0001618">
    <property type="term" value="F:virus receptor activity"/>
    <property type="evidence" value="ECO:0000314"/>
    <property type="project" value="UniProt"/>
</dbReference>
<dbReference type="GO" id="GO:0008270">
    <property type="term" value="F:zinc ion binding"/>
    <property type="evidence" value="ECO:0000314"/>
    <property type="project" value="UniProtKB"/>
</dbReference>
<dbReference type="GO" id="GO:0002250">
    <property type="term" value="P:adaptive immune response"/>
    <property type="evidence" value="ECO:0007669"/>
    <property type="project" value="UniProtKB-KW"/>
</dbReference>
<dbReference type="GO" id="GO:0019722">
    <property type="term" value="P:calcium-mediated signaling"/>
    <property type="evidence" value="ECO:0007669"/>
    <property type="project" value="Ensembl"/>
</dbReference>
<dbReference type="GO" id="GO:0007155">
    <property type="term" value="P:cell adhesion"/>
    <property type="evidence" value="ECO:0007669"/>
    <property type="project" value="InterPro"/>
</dbReference>
<dbReference type="GO" id="GO:0007169">
    <property type="term" value="P:cell surface receptor protein tyrosine kinase signaling pathway"/>
    <property type="evidence" value="ECO:0000303"/>
    <property type="project" value="UniProtKB"/>
</dbReference>
<dbReference type="GO" id="GO:0007166">
    <property type="term" value="P:cell surface receptor signaling pathway"/>
    <property type="evidence" value="ECO:0000304"/>
    <property type="project" value="ProtInc"/>
</dbReference>
<dbReference type="GO" id="GO:0097011">
    <property type="term" value="P:cellular response to granulocyte macrophage colony-stimulating factor stimulus"/>
    <property type="evidence" value="ECO:0000314"/>
    <property type="project" value="CAFA"/>
</dbReference>
<dbReference type="GO" id="GO:1904637">
    <property type="term" value="P:cellular response to ionomycin"/>
    <property type="evidence" value="ECO:0007669"/>
    <property type="project" value="Ensembl"/>
</dbReference>
<dbReference type="GO" id="GO:0050829">
    <property type="term" value="P:defense response to Gram-negative bacterium"/>
    <property type="evidence" value="ECO:0007669"/>
    <property type="project" value="Ensembl"/>
</dbReference>
<dbReference type="GO" id="GO:0007167">
    <property type="term" value="P:enzyme-linked receptor protein signaling pathway"/>
    <property type="evidence" value="ECO:0000304"/>
    <property type="project" value="ProtInc"/>
</dbReference>
<dbReference type="GO" id="GO:0035397">
    <property type="term" value="P:helper T cell enhancement of adaptive immune response"/>
    <property type="evidence" value="ECO:0007669"/>
    <property type="project" value="Ensembl"/>
</dbReference>
<dbReference type="GO" id="GO:0006955">
    <property type="term" value="P:immune response"/>
    <property type="evidence" value="ECO:0000303"/>
    <property type="project" value="UniProtKB"/>
</dbReference>
<dbReference type="GO" id="GO:0035723">
    <property type="term" value="P:interleukin-15-mediated signaling pathway"/>
    <property type="evidence" value="ECO:0000314"/>
    <property type="project" value="CAFA"/>
</dbReference>
<dbReference type="GO" id="GO:0030225">
    <property type="term" value="P:macrophage differentiation"/>
    <property type="evidence" value="ECO:0000315"/>
    <property type="project" value="ARUK-UCL"/>
</dbReference>
<dbReference type="GO" id="GO:0032507">
    <property type="term" value="P:maintenance of protein location in cell"/>
    <property type="evidence" value="ECO:0000314"/>
    <property type="project" value="MGI"/>
</dbReference>
<dbReference type="GO" id="GO:0010524">
    <property type="term" value="P:positive regulation of calcium ion transport into cytosol"/>
    <property type="evidence" value="ECO:0007669"/>
    <property type="project" value="Ensembl"/>
</dbReference>
<dbReference type="GO" id="GO:0050850">
    <property type="term" value="P:positive regulation of calcium-mediated signaling"/>
    <property type="evidence" value="ECO:0007669"/>
    <property type="project" value="Ensembl"/>
</dbReference>
<dbReference type="GO" id="GO:0043123">
    <property type="term" value="P:positive regulation of canonical NF-kappaB signal transduction"/>
    <property type="evidence" value="ECO:0000314"/>
    <property type="project" value="CAFA"/>
</dbReference>
<dbReference type="GO" id="GO:0045893">
    <property type="term" value="P:positive regulation of DNA-templated transcription"/>
    <property type="evidence" value="ECO:0000314"/>
    <property type="project" value="CAFA"/>
</dbReference>
<dbReference type="GO" id="GO:0070374">
    <property type="term" value="P:positive regulation of ERK1 and ERK2 cascade"/>
    <property type="evidence" value="ECO:0000314"/>
    <property type="project" value="CAFA"/>
</dbReference>
<dbReference type="GO" id="GO:0032743">
    <property type="term" value="P:positive regulation of interleukin-2 production"/>
    <property type="evidence" value="ECO:0000303"/>
    <property type="project" value="UniProtKB"/>
</dbReference>
<dbReference type="GO" id="GO:0033674">
    <property type="term" value="P:positive regulation of kinase activity"/>
    <property type="evidence" value="ECO:0000314"/>
    <property type="project" value="CAFA"/>
</dbReference>
<dbReference type="GO" id="GO:0043410">
    <property type="term" value="P:positive regulation of MAPK cascade"/>
    <property type="evidence" value="ECO:0000314"/>
    <property type="project" value="CAFA"/>
</dbReference>
<dbReference type="GO" id="GO:0045657">
    <property type="term" value="P:positive regulation of monocyte differentiation"/>
    <property type="evidence" value="ECO:0000314"/>
    <property type="project" value="CAFA"/>
</dbReference>
<dbReference type="GO" id="GO:0045860">
    <property type="term" value="P:positive regulation of protein kinase activity"/>
    <property type="evidence" value="ECO:0000314"/>
    <property type="project" value="UniProtKB"/>
</dbReference>
<dbReference type="GO" id="GO:0001934">
    <property type="term" value="P:positive regulation of protein phosphorylation"/>
    <property type="evidence" value="ECO:0000314"/>
    <property type="project" value="CAFA"/>
</dbReference>
<dbReference type="GO" id="GO:0042102">
    <property type="term" value="P:positive regulation of T cell proliferation"/>
    <property type="evidence" value="ECO:0007669"/>
    <property type="project" value="Ensembl"/>
</dbReference>
<dbReference type="GO" id="GO:0046598">
    <property type="term" value="P:positive regulation of viral entry into host cell"/>
    <property type="evidence" value="ECO:0000314"/>
    <property type="project" value="CAFA"/>
</dbReference>
<dbReference type="GO" id="GO:0051924">
    <property type="term" value="P:regulation of calcium ion transport"/>
    <property type="evidence" value="ECO:0000314"/>
    <property type="project" value="CAFA"/>
</dbReference>
<dbReference type="GO" id="GO:0050863">
    <property type="term" value="P:regulation of T cell activation"/>
    <property type="evidence" value="ECO:0000314"/>
    <property type="project" value="UniProtKB"/>
</dbReference>
<dbReference type="GO" id="GO:0032355">
    <property type="term" value="P:response to estradiol"/>
    <property type="evidence" value="ECO:0007669"/>
    <property type="project" value="Ensembl"/>
</dbReference>
<dbReference type="GO" id="GO:0045471">
    <property type="term" value="P:response to ethanol"/>
    <property type="evidence" value="ECO:0007669"/>
    <property type="project" value="Ensembl"/>
</dbReference>
<dbReference type="GO" id="GO:1904313">
    <property type="term" value="P:response to methamphetamine hydrochloride"/>
    <property type="evidence" value="ECO:0007669"/>
    <property type="project" value="Ensembl"/>
</dbReference>
<dbReference type="GO" id="GO:0033280">
    <property type="term" value="P:response to vitamin D"/>
    <property type="evidence" value="ECO:0007669"/>
    <property type="project" value="Ensembl"/>
</dbReference>
<dbReference type="GO" id="GO:0007165">
    <property type="term" value="P:signal transduction"/>
    <property type="evidence" value="ECO:0000304"/>
    <property type="project" value="ProtInc"/>
</dbReference>
<dbReference type="GO" id="GO:0046718">
    <property type="term" value="P:symbiont entry into host cell"/>
    <property type="evidence" value="ECO:0000314"/>
    <property type="project" value="UniProt"/>
</dbReference>
<dbReference type="GO" id="GO:0030217">
    <property type="term" value="P:T cell differentiation"/>
    <property type="evidence" value="ECO:0000314"/>
    <property type="project" value="UniProtKB"/>
</dbReference>
<dbReference type="GO" id="GO:0045058">
    <property type="term" value="P:T cell selection"/>
    <property type="evidence" value="ECO:0000314"/>
    <property type="project" value="UniProtKB"/>
</dbReference>
<dbReference type="CDD" id="cd22570">
    <property type="entry name" value="CD4_CD"/>
    <property type="match status" value="1"/>
</dbReference>
<dbReference type="CDD" id="cd07694">
    <property type="entry name" value="IgC2_2_CD4"/>
    <property type="match status" value="1"/>
</dbReference>
<dbReference type="CDD" id="cd07690">
    <property type="entry name" value="IgV_1_CD4"/>
    <property type="match status" value="1"/>
</dbReference>
<dbReference type="CDD" id="cd07695">
    <property type="entry name" value="IgV_3_CD4"/>
    <property type="match status" value="1"/>
</dbReference>
<dbReference type="FunFam" id="1.20.5.900:FF:000001">
    <property type="entry name" value="T-cell surface glycoprotein CD4"/>
    <property type="match status" value="1"/>
</dbReference>
<dbReference type="FunFam" id="2.60.40.10:FF:001105">
    <property type="entry name" value="T-cell surface glycoprotein CD4"/>
    <property type="match status" value="1"/>
</dbReference>
<dbReference type="FunFam" id="2.60.40.10:FF:001204">
    <property type="entry name" value="T-cell surface glycoprotein CD4"/>
    <property type="match status" value="1"/>
</dbReference>
<dbReference type="FunFam" id="2.60.40.10:FF:001221">
    <property type="entry name" value="T-cell surface glycoprotein CD4"/>
    <property type="match status" value="1"/>
</dbReference>
<dbReference type="FunFam" id="2.60.40.10:FF:001253">
    <property type="entry name" value="T-cell surface glycoprotein CD4"/>
    <property type="match status" value="1"/>
</dbReference>
<dbReference type="Gene3D" id="2.60.40.10">
    <property type="entry name" value="Immunoglobulins"/>
    <property type="match status" value="4"/>
</dbReference>
<dbReference type="Gene3D" id="1.20.5.900">
    <property type="entry name" value="transmembrane domain of human cd4"/>
    <property type="match status" value="1"/>
</dbReference>
<dbReference type="InterPro" id="IPR000973">
    <property type="entry name" value="CD4"/>
</dbReference>
<dbReference type="InterPro" id="IPR015274">
    <property type="entry name" value="CD4-extracel"/>
</dbReference>
<dbReference type="InterPro" id="IPR007110">
    <property type="entry name" value="Ig-like_dom"/>
</dbReference>
<dbReference type="InterPro" id="IPR036179">
    <property type="entry name" value="Ig-like_dom_sf"/>
</dbReference>
<dbReference type="InterPro" id="IPR013783">
    <property type="entry name" value="Ig-like_fold"/>
</dbReference>
<dbReference type="InterPro" id="IPR008424">
    <property type="entry name" value="Ig_C2-set"/>
</dbReference>
<dbReference type="InterPro" id="IPR003599">
    <property type="entry name" value="Ig_sub"/>
</dbReference>
<dbReference type="InterPro" id="IPR003598">
    <property type="entry name" value="Ig_sub2"/>
</dbReference>
<dbReference type="InterPro" id="IPR013106">
    <property type="entry name" value="Ig_V-set"/>
</dbReference>
<dbReference type="InterPro" id="IPR013151">
    <property type="entry name" value="Immunoglobulin_dom"/>
</dbReference>
<dbReference type="InterPro" id="IPR021963">
    <property type="entry name" value="Tcell_CD4_Cterm"/>
</dbReference>
<dbReference type="PANTHER" id="PTHR11422">
    <property type="entry name" value="T-CELL SURFACE GLYCOPROTEIN CD4"/>
    <property type="match status" value="1"/>
</dbReference>
<dbReference type="PANTHER" id="PTHR11422:SF0">
    <property type="entry name" value="T-CELL SURFACE GLYCOPROTEIN CD4"/>
    <property type="match status" value="1"/>
</dbReference>
<dbReference type="Pfam" id="PF05790">
    <property type="entry name" value="C2-set"/>
    <property type="match status" value="2"/>
</dbReference>
<dbReference type="Pfam" id="PF09191">
    <property type="entry name" value="CD4-extracel"/>
    <property type="match status" value="1"/>
</dbReference>
<dbReference type="Pfam" id="PF00047">
    <property type="entry name" value="ig"/>
    <property type="match status" value="1"/>
</dbReference>
<dbReference type="Pfam" id="PF12104">
    <property type="entry name" value="Tcell_CD4_C"/>
    <property type="match status" value="1"/>
</dbReference>
<dbReference type="PRINTS" id="PR00692">
    <property type="entry name" value="CD4TCANTIGEN"/>
</dbReference>
<dbReference type="SMART" id="SM00409">
    <property type="entry name" value="IG"/>
    <property type="match status" value="3"/>
</dbReference>
<dbReference type="SMART" id="SM00408">
    <property type="entry name" value="IGc2"/>
    <property type="match status" value="2"/>
</dbReference>
<dbReference type="SMART" id="SM00406">
    <property type="entry name" value="IGv"/>
    <property type="match status" value="1"/>
</dbReference>
<dbReference type="SUPFAM" id="SSF48726">
    <property type="entry name" value="Immunoglobulin"/>
    <property type="match status" value="4"/>
</dbReference>
<dbReference type="PROSITE" id="PS50835">
    <property type="entry name" value="IG_LIKE"/>
    <property type="match status" value="1"/>
</dbReference>
<keyword id="KW-0002">3D-structure</keyword>
<keyword id="KW-1064">Adaptive immunity</keyword>
<keyword id="KW-1003">Cell membrane</keyword>
<keyword id="KW-0903">Direct protein sequencing</keyword>
<keyword id="KW-1015">Disulfide bond</keyword>
<keyword id="KW-0325">Glycoprotein</keyword>
<keyword id="KW-1183">Host cell receptor for virus entry</keyword>
<keyword id="KW-0945">Host-virus interaction</keyword>
<keyword id="KW-0391">Immunity</keyword>
<keyword id="KW-0393">Immunoglobulin domain</keyword>
<keyword id="KW-0449">Lipoprotein</keyword>
<keyword id="KW-0472">Membrane</keyword>
<keyword id="KW-0564">Palmitate</keyword>
<keyword id="KW-0597">Phosphoprotein</keyword>
<keyword id="KW-1267">Proteomics identification</keyword>
<keyword id="KW-0675">Receptor</keyword>
<keyword id="KW-1185">Reference proteome</keyword>
<keyword id="KW-0677">Repeat</keyword>
<keyword id="KW-0732">Signal</keyword>
<keyword id="KW-0812">Transmembrane</keyword>
<keyword id="KW-1133">Transmembrane helix</keyword>
<gene>
    <name type="primary">CD4</name>
</gene>
<organism>
    <name type="scientific">Homo sapiens</name>
    <name type="common">Human</name>
    <dbReference type="NCBI Taxonomy" id="9606"/>
    <lineage>
        <taxon>Eukaryota</taxon>
        <taxon>Metazoa</taxon>
        <taxon>Chordata</taxon>
        <taxon>Craniata</taxon>
        <taxon>Vertebrata</taxon>
        <taxon>Euteleostomi</taxon>
        <taxon>Mammalia</taxon>
        <taxon>Eutheria</taxon>
        <taxon>Euarchontoglires</taxon>
        <taxon>Primates</taxon>
        <taxon>Haplorrhini</taxon>
        <taxon>Catarrhini</taxon>
        <taxon>Hominidae</taxon>
        <taxon>Homo</taxon>
    </lineage>
</organism>